<keyword id="KW-0025">Alternative splicing</keyword>
<keyword id="KW-0175">Coiled coil</keyword>
<keyword id="KW-0963">Cytoplasm</keyword>
<keyword id="KW-0217">Developmental protein</keyword>
<keyword id="KW-0221">Differentiation</keyword>
<keyword id="KW-0539">Nucleus</keyword>
<keyword id="KW-1267">Proteomics identification</keyword>
<keyword id="KW-1185">Reference proteome</keyword>
<feature type="chain" id="PRO_0000089416" description="Coiled-coil alpha-helical rod protein 1">
    <location>
        <begin position="1"/>
        <end position="782"/>
    </location>
</feature>
<feature type="region of interest" description="Disordered" evidence="2">
    <location>
        <begin position="62"/>
        <end position="82"/>
    </location>
</feature>
<feature type="region of interest" description="Disordered" evidence="2">
    <location>
        <begin position="177"/>
        <end position="218"/>
    </location>
</feature>
<feature type="coiled-coil region" evidence="1">
    <location>
        <begin position="111"/>
        <end position="303"/>
    </location>
</feature>
<feature type="coiled-coil region" evidence="1">
    <location>
        <begin position="344"/>
        <end position="437"/>
    </location>
</feature>
<feature type="coiled-coil region" evidence="1">
    <location>
        <begin position="498"/>
        <end position="691"/>
    </location>
</feature>
<feature type="compositionally biased region" description="Basic and acidic residues" evidence="2">
    <location>
        <begin position="62"/>
        <end position="74"/>
    </location>
</feature>
<feature type="compositionally biased region" description="Basic and acidic residues" evidence="2">
    <location>
        <begin position="208"/>
        <end position="218"/>
    </location>
</feature>
<feature type="splice variant" id="VSP_047069" description="In isoform 3." evidence="13">
    <original>MFPPSGSTGLIPPSHFQARPLSTLPRMAPTWLSDIPLVQPP</original>
    <variation>MWPHSAGARPWASTLTGKDPRVMACWCLDGLPSGLAEPWRELWRWRSRPLHCVPPFSPLARSSRDHRNLRRRGNIDGWRQNLEPSNNVEMFPPS</variation>
    <location>
        <begin position="1"/>
        <end position="41"/>
    </location>
</feature>
<feature type="splice variant" id="VSP_038062" description="In isoform 2." evidence="12">
    <original>M</original>
    <variation>MWPHSAGARPWASTLTGKDPRVMACWCLDGLPSGLAEPWRELWRWRSRPLHCVPPFSPLARSSRDHRNLRRRGNIDGWRQNLEPSNNVEM</variation>
    <location>
        <position position="1"/>
    </location>
</feature>
<feature type="sequence variant" id="VAR_017761" description="In dbSNP:rs130075." evidence="5 6">
    <original>R</original>
    <variation>Q</variation>
    <location>
        <position position="102"/>
    </location>
</feature>
<feature type="sequence variant" id="VAR_017762" description="In allele HCR*WWCC; risk factor for psoriasis; dbSNP:rs130065." evidence="3 5 6 7">
    <original>R</original>
    <variation>W</variation>
    <location>
        <position position="103"/>
    </location>
</feature>
<feature type="sequence variant" id="VAR_017763" description="In allele HCR*WWCC; risk factor for psoriasis; dbSNP:rs130076." evidence="3 5 6 7 9">
    <original>R</original>
    <variation>W</variation>
    <location>
        <position position="109"/>
    </location>
</feature>
<feature type="sequence variant" id="VAR_017764" description="In dbSNP:rs130066." evidence="3 4 5 6 7 9 10 11">
    <original>S</original>
    <variation>R</variation>
    <location>
        <position position="164"/>
    </location>
</feature>
<feature type="sequence variant" id="VAR_017782" description="In dbSNP:rs11540822." evidence="5">
    <original>L</original>
    <variation>Q</variation>
    <location>
        <position position="179"/>
    </location>
</feature>
<feature type="sequence variant" id="VAR_017765" description="In dbSNP:rs130067." evidence="3 5 6 8 10 11">
    <original>E</original>
    <variation>D</variation>
    <location>
        <position position="275"/>
    </location>
</feature>
<feature type="sequence variant" id="VAR_017783" description="In dbSNP:rs2027937." evidence="5">
    <original>A</original>
    <variation>T</variation>
    <location>
        <position position="367"/>
    </location>
</feature>
<feature type="sequence variant" id="VAR_017767" description="In dbSNP:rs130069." evidence="5 8">
    <original>R</original>
    <variation>Q</variation>
    <location>
        <position position="417"/>
    </location>
</feature>
<feature type="sequence variant" id="VAR_017766" description="In dbSNP:rs130068." evidence="3 4 5 6 7 9">
    <original>R</original>
    <variation>W</variation>
    <location>
        <position position="417"/>
    </location>
</feature>
<feature type="sequence variant" id="VAR_017768" description="In dbSNP:rs2073720.">
    <original>K</original>
    <variation>R</variation>
    <location>
        <position position="546"/>
    </location>
</feature>
<feature type="sequence variant" id="VAR_017769" description="In allele HCR*WWCC; risk factor for psoriasis; dbSNP:rs130079." evidence="3 4 5 6 7 9">
    <original>G</original>
    <variation>C</variation>
    <location>
        <position position="575"/>
    </location>
</feature>
<feature type="sequence variant" id="VAR_017770" description="In dbSNP:rs130072." evidence="5 6">
    <original>R</original>
    <variation>Q</variation>
    <location>
        <position position="627"/>
    </location>
</feature>
<feature type="sequence variant" id="VAR_017771" description="In dbSNP:rs130074." evidence="6">
    <original>Q</original>
    <variation>H</variation>
    <location>
        <position position="639"/>
    </location>
</feature>
<feature type="sequence variant" id="VAR_017784" description="In dbSNP:rs140560656." evidence="5">
    <original>A</original>
    <variation>V</variation>
    <location>
        <position position="733"/>
    </location>
</feature>
<feature type="sequence variant" id="VAR_017772" description="In allele HCR*WWCC; risk factor for psoriasis; dbSNP:rs1576." evidence="3 4 5 6 7 9">
    <original>S</original>
    <variation>C</variation>
    <location>
        <position position="776"/>
    </location>
</feature>
<feature type="sequence conflict" description="In Ref. 7; BAA81890." evidence="13" ref="7">
    <original>P</original>
    <variation>A</variation>
    <location>
        <position position="20"/>
    </location>
</feature>
<feature type="sequence conflict" description="In Ref. 4; BAA91007." evidence="13" ref="4">
    <original>H</original>
    <variation>Y</variation>
    <location>
        <position position="43"/>
    </location>
</feature>
<feature type="sequence conflict" description="In Ref. 4; BAA91236." evidence="13" ref="4">
    <original>E</original>
    <variation>G</variation>
    <location>
        <position position="395"/>
    </location>
</feature>
<feature type="sequence conflict" description="In Ref. 4; BAA91007." evidence="13" ref="4">
    <original>H</original>
    <variation>L</variation>
    <location>
        <position position="472"/>
    </location>
</feature>
<feature type="sequence conflict" description="In Ref. 4; BAA91007." evidence="13" ref="4">
    <original>V</original>
    <variation>A</variation>
    <location>
        <position position="498"/>
    </location>
</feature>
<feature type="sequence conflict" description="In Ref. 4; BAA91236." evidence="13" ref="4">
    <original>Q</original>
    <variation>L</variation>
    <location>
        <position position="667"/>
    </location>
</feature>
<dbReference type="EMBL" id="AY029160">
    <property type="protein sequence ID" value="AAK55759.1"/>
    <property type="molecule type" value="mRNA"/>
</dbReference>
<dbReference type="EMBL" id="BA000025">
    <property type="protein sequence ID" value="BAB63313.1"/>
    <property type="status" value="ALT_SEQ"/>
    <property type="molecule type" value="Genomic_DNA"/>
</dbReference>
<dbReference type="EMBL" id="AB088104">
    <property type="protein sequence ID" value="BAC54937.1"/>
    <property type="status" value="ALT_SEQ"/>
    <property type="molecule type" value="Genomic_DNA"/>
</dbReference>
<dbReference type="EMBL" id="AK000204">
    <property type="protein sequence ID" value="BAA91007.1"/>
    <property type="molecule type" value="mRNA"/>
</dbReference>
<dbReference type="EMBL" id="AK000217">
    <property type="protein sequence ID" value="BAA91016.1"/>
    <property type="molecule type" value="mRNA"/>
</dbReference>
<dbReference type="EMBL" id="AK000533">
    <property type="protein sequence ID" value="BAA91236.1"/>
    <property type="status" value="ALT_INIT"/>
    <property type="molecule type" value="mRNA"/>
</dbReference>
<dbReference type="EMBL" id="AL662833">
    <property type="status" value="NOT_ANNOTATED_CDS"/>
    <property type="molecule type" value="Genomic_DNA"/>
</dbReference>
<dbReference type="EMBL" id="AL662844">
    <property type="status" value="NOT_ANNOTATED_CDS"/>
    <property type="molecule type" value="Genomic_DNA"/>
</dbReference>
<dbReference type="EMBL" id="AL773544">
    <property type="status" value="NOT_ANNOTATED_CDS"/>
    <property type="molecule type" value="Genomic_DNA"/>
</dbReference>
<dbReference type="EMBL" id="CR753819">
    <property type="status" value="NOT_ANNOTATED_CDS"/>
    <property type="molecule type" value="Genomic_DNA"/>
</dbReference>
<dbReference type="EMBL" id="BC110535">
    <property type="protein sequence ID" value="AAI10536.1"/>
    <property type="status" value="ALT_SEQ"/>
    <property type="molecule type" value="mRNA"/>
</dbReference>
<dbReference type="EMBL" id="AB029331">
    <property type="protein sequence ID" value="BAA81890.1"/>
    <property type="status" value="ALT_INIT"/>
    <property type="molecule type" value="mRNA"/>
</dbReference>
<dbReference type="EMBL" id="AB029343">
    <property type="protein sequence ID" value="BAA82158.1"/>
    <property type="status" value="ALT_SEQ"/>
    <property type="molecule type" value="Genomic_DNA"/>
</dbReference>
<dbReference type="EMBL" id="AF216493">
    <property type="protein sequence ID" value="AAF74221.1"/>
    <property type="status" value="ALT_INIT"/>
    <property type="molecule type" value="mRNA"/>
</dbReference>
<dbReference type="CCDS" id="CCDS43445.1">
    <molecule id="Q8TD31-2"/>
</dbReference>
<dbReference type="CCDS" id="CCDS4695.1">
    <molecule id="Q8TD31-1"/>
</dbReference>
<dbReference type="CCDS" id="CCDS47397.1">
    <molecule id="Q8TD31-3"/>
</dbReference>
<dbReference type="RefSeq" id="NP_001099033.1">
    <molecule id="Q8TD31-3"/>
    <property type="nucleotide sequence ID" value="NM_001105563.3"/>
</dbReference>
<dbReference type="RefSeq" id="NP_001099034.1">
    <molecule id="Q8TD31-2"/>
    <property type="nucleotide sequence ID" value="NM_001105564.2"/>
</dbReference>
<dbReference type="RefSeq" id="NP_001381571.1">
    <molecule id="Q8TD31-1"/>
    <property type="nucleotide sequence ID" value="NM_001394642.1"/>
</dbReference>
<dbReference type="RefSeq" id="NP_001381572.1">
    <molecule id="Q8TD31-1"/>
    <property type="nucleotide sequence ID" value="NM_001394643.1"/>
</dbReference>
<dbReference type="RefSeq" id="NP_001381573.1">
    <molecule id="Q8TD31-1"/>
    <property type="nucleotide sequence ID" value="NM_001394644.1"/>
</dbReference>
<dbReference type="RefSeq" id="NP_061925.2">
    <molecule id="Q8TD31-1"/>
    <property type="nucleotide sequence ID" value="NM_019052.4"/>
</dbReference>
<dbReference type="RefSeq" id="XP_011513005.1">
    <property type="nucleotide sequence ID" value="XM_011514703.1"/>
</dbReference>
<dbReference type="RefSeq" id="XP_016866451.1">
    <property type="nucleotide sequence ID" value="XM_017010962.1"/>
</dbReference>
<dbReference type="RefSeq" id="XP_016866452.1">
    <molecule id="Q8TD31-1"/>
    <property type="nucleotide sequence ID" value="XM_017010963.2"/>
</dbReference>
<dbReference type="RefSeq" id="XP_016866453.1">
    <molecule id="Q8TD31-1"/>
    <property type="nucleotide sequence ID" value="XM_017010964.2"/>
</dbReference>
<dbReference type="RefSeq" id="XP_016866454.1">
    <property type="nucleotide sequence ID" value="XM_017010965.1"/>
</dbReference>
<dbReference type="RefSeq" id="XP_016866455.1">
    <molecule id="Q8TD31-1"/>
    <property type="nucleotide sequence ID" value="XM_017010966.2"/>
</dbReference>
<dbReference type="RefSeq" id="XP_016866456.1">
    <property type="nucleotide sequence ID" value="XM_017010967.1"/>
</dbReference>
<dbReference type="RefSeq" id="XP_016866457.1">
    <molecule id="Q8TD31-1"/>
    <property type="nucleotide sequence ID" value="XM_017010968.2"/>
</dbReference>
<dbReference type="RefSeq" id="XP_047274864.1">
    <molecule id="Q8TD31-1"/>
    <property type="nucleotide sequence ID" value="XM_047418908.1"/>
</dbReference>
<dbReference type="RefSeq" id="XP_047274865.1">
    <molecule id="Q8TD31-1"/>
    <property type="nucleotide sequence ID" value="XM_047418909.1"/>
</dbReference>
<dbReference type="RefSeq" id="XP_047274866.1">
    <molecule id="Q8TD31-1"/>
    <property type="nucleotide sequence ID" value="XM_047418910.1"/>
</dbReference>
<dbReference type="RefSeq" id="XP_054187062.1">
    <molecule id="Q8TD31-1"/>
    <property type="nucleotide sequence ID" value="XM_054331087.1"/>
</dbReference>
<dbReference type="RefSeq" id="XP_054187063.1">
    <molecule id="Q8TD31-1"/>
    <property type="nucleotide sequence ID" value="XM_054331088.1"/>
</dbReference>
<dbReference type="SMR" id="Q8TD31"/>
<dbReference type="BioGRID" id="120022">
    <property type="interactions" value="238"/>
</dbReference>
<dbReference type="DIP" id="DIP-40394N"/>
<dbReference type="FunCoup" id="Q8TD31">
    <property type="interactions" value="673"/>
</dbReference>
<dbReference type="IntAct" id="Q8TD31">
    <property type="interactions" value="207"/>
</dbReference>
<dbReference type="MINT" id="Q8TD31"/>
<dbReference type="STRING" id="9606.ENSP00000379566"/>
<dbReference type="iPTMnet" id="Q8TD31"/>
<dbReference type="PhosphoSitePlus" id="Q8TD31"/>
<dbReference type="BioMuta" id="CCHCR1"/>
<dbReference type="DMDM" id="42558938"/>
<dbReference type="jPOST" id="Q8TD31"/>
<dbReference type="MassIVE" id="Q8TD31"/>
<dbReference type="PaxDb" id="9606-ENSP00000379566"/>
<dbReference type="PeptideAtlas" id="Q8TD31"/>
<dbReference type="ProteomicsDB" id="19833"/>
<dbReference type="ProteomicsDB" id="74228">
    <molecule id="Q8TD31-1"/>
</dbReference>
<dbReference type="ProteomicsDB" id="74229">
    <molecule id="Q8TD31-2"/>
</dbReference>
<dbReference type="Pumba" id="Q8TD31"/>
<dbReference type="Antibodypedia" id="53233">
    <property type="antibodies" value="98 antibodies from 22 providers"/>
</dbReference>
<dbReference type="DNASU" id="54535"/>
<dbReference type="Ensembl" id="ENST00000376266.9">
    <molecule id="Q8TD31-1"/>
    <property type="protein sequence ID" value="ENSP00000365442.5"/>
    <property type="gene ID" value="ENSG00000204536.15"/>
</dbReference>
<dbReference type="Ensembl" id="ENST00000383341.8">
    <property type="protein sequence ID" value="ENSP00000372832.4"/>
    <property type="gene ID" value="ENSG00000206355.11"/>
</dbReference>
<dbReference type="Ensembl" id="ENST00000383527.8">
    <molecule id="Q8TD31-1"/>
    <property type="protein sequence ID" value="ENSP00000373019.4"/>
    <property type="gene ID" value="ENSG00000206457.10"/>
</dbReference>
<dbReference type="Ensembl" id="ENST00000396268.8">
    <molecule id="Q8TD31-2"/>
    <property type="protein sequence ID" value="ENSP00000379566.3"/>
    <property type="gene ID" value="ENSG00000204536.15"/>
</dbReference>
<dbReference type="Ensembl" id="ENST00000400352.7">
    <property type="protein sequence ID" value="ENSP00000383205.3"/>
    <property type="gene ID" value="ENSG00000206355.11"/>
</dbReference>
<dbReference type="Ensembl" id="ENST00000400412.7">
    <molecule id="Q8TD31-2"/>
    <property type="protein sequence ID" value="ENSP00000383263.3"/>
    <property type="gene ID" value="ENSG00000206457.10"/>
</dbReference>
<dbReference type="Ensembl" id="ENST00000416163.6">
    <property type="protein sequence ID" value="ENSP00000408012.2"/>
    <property type="gene ID" value="ENSG00000234114.8"/>
</dbReference>
<dbReference type="Ensembl" id="ENST00000425620.6">
    <property type="protein sequence ID" value="ENSP00000393042.2"/>
    <property type="gene ID" value="ENSG00000234114.8"/>
</dbReference>
<dbReference type="Ensembl" id="ENST00000451521.6">
    <molecule id="Q8TD31-3"/>
    <property type="protein sequence ID" value="ENSP00000401039.2"/>
    <property type="gene ID" value="ENSG00000204536.15"/>
</dbReference>
<dbReference type="GeneID" id="54535"/>
<dbReference type="KEGG" id="hsa:54535"/>
<dbReference type="MANE-Select" id="ENST00000396268.8">
    <molecule id="Q8TD31-2"/>
    <property type="protein sequence ID" value="ENSP00000379566.3"/>
    <property type="RefSeq nucleotide sequence ID" value="NM_001105564.2"/>
    <property type="RefSeq protein sequence ID" value="NP_001099034.1"/>
</dbReference>
<dbReference type="UCSC" id="uc003nsp.4">
    <molecule id="Q8TD31-1"/>
    <property type="organism name" value="human"/>
</dbReference>
<dbReference type="AGR" id="HGNC:13930"/>
<dbReference type="CTD" id="54535"/>
<dbReference type="DisGeNET" id="54535"/>
<dbReference type="GeneCards" id="CCHCR1"/>
<dbReference type="HGNC" id="HGNC:13930">
    <property type="gene designation" value="CCHCR1"/>
</dbReference>
<dbReference type="HPA" id="ENSG00000204536">
    <property type="expression patterns" value="Tissue enriched (testis)"/>
</dbReference>
<dbReference type="MIM" id="605310">
    <property type="type" value="gene"/>
</dbReference>
<dbReference type="neXtProt" id="NX_Q8TD31"/>
<dbReference type="OpenTargets" id="ENSG00000204536"/>
<dbReference type="PharmGKB" id="PA134942738"/>
<dbReference type="VEuPathDB" id="HostDB:ENSG00000204536"/>
<dbReference type="eggNOG" id="KOG3802">
    <property type="taxonomic scope" value="Eukaryota"/>
</dbReference>
<dbReference type="GeneTree" id="ENSGT00940000153251"/>
<dbReference type="InParanoid" id="Q8TD31"/>
<dbReference type="OMA" id="LTCWREK"/>
<dbReference type="OrthoDB" id="193258at2759"/>
<dbReference type="PAN-GO" id="Q8TD31">
    <property type="GO annotations" value="2 GO annotations based on evolutionary models"/>
</dbReference>
<dbReference type="PhylomeDB" id="Q8TD31"/>
<dbReference type="TreeFam" id="TF336947"/>
<dbReference type="PathwayCommons" id="Q8TD31"/>
<dbReference type="SignaLink" id="Q8TD31"/>
<dbReference type="BioGRID-ORCS" id="54535">
    <property type="hits" value="10 hits in 1157 CRISPR screens"/>
</dbReference>
<dbReference type="CD-CODE" id="232F8A39">
    <property type="entry name" value="P-body"/>
</dbReference>
<dbReference type="CD-CODE" id="8C2F96ED">
    <property type="entry name" value="Centrosome"/>
</dbReference>
<dbReference type="ChiTaRS" id="CCHCR1">
    <property type="organism name" value="human"/>
</dbReference>
<dbReference type="GeneWiki" id="CCHCR1"/>
<dbReference type="GenomeRNAi" id="54535"/>
<dbReference type="Pharos" id="Q8TD31">
    <property type="development level" value="Tbio"/>
</dbReference>
<dbReference type="PRO" id="PR:Q8TD31"/>
<dbReference type="Proteomes" id="UP000005640">
    <property type="component" value="Chromosome 6"/>
</dbReference>
<dbReference type="RNAct" id="Q8TD31">
    <property type="molecule type" value="protein"/>
</dbReference>
<dbReference type="Bgee" id="ENSG00000204536">
    <property type="expression patterns" value="Expressed in left testis and 97 other cell types or tissues"/>
</dbReference>
<dbReference type="ExpressionAtlas" id="Q8TD31">
    <property type="expression patterns" value="baseline and differential"/>
</dbReference>
<dbReference type="GO" id="GO:0005814">
    <property type="term" value="C:centriole"/>
    <property type="evidence" value="ECO:0000314"/>
    <property type="project" value="UniProtKB"/>
</dbReference>
<dbReference type="GO" id="GO:0005829">
    <property type="term" value="C:cytosol"/>
    <property type="evidence" value="ECO:0000314"/>
    <property type="project" value="HPA"/>
</dbReference>
<dbReference type="GO" id="GO:0005634">
    <property type="term" value="C:nucleus"/>
    <property type="evidence" value="ECO:0007669"/>
    <property type="project" value="UniProtKB-SubCell"/>
</dbReference>
<dbReference type="GO" id="GO:0042802">
    <property type="term" value="F:identical protein binding"/>
    <property type="evidence" value="ECO:0000353"/>
    <property type="project" value="IntAct"/>
</dbReference>
<dbReference type="GO" id="GO:0030154">
    <property type="term" value="P:cell differentiation"/>
    <property type="evidence" value="ECO:0007669"/>
    <property type="project" value="UniProtKB-KW"/>
</dbReference>
<dbReference type="GO" id="GO:0006611">
    <property type="term" value="P:protein export from nucleus"/>
    <property type="evidence" value="ECO:0000318"/>
    <property type="project" value="GO_Central"/>
</dbReference>
<dbReference type="InterPro" id="IPR009800">
    <property type="entry name" value="HCR"/>
</dbReference>
<dbReference type="PANTHER" id="PTHR46822">
    <property type="entry name" value="COILED-COIL ALPHA-HELICAL ROD PROTEIN 1"/>
    <property type="match status" value="1"/>
</dbReference>
<dbReference type="PANTHER" id="PTHR46822:SF1">
    <property type="entry name" value="COILED-COIL ALPHA-HELICAL ROD PROTEIN 1"/>
    <property type="match status" value="1"/>
</dbReference>
<dbReference type="Pfam" id="PF07111">
    <property type="entry name" value="HCR"/>
    <property type="match status" value="1"/>
</dbReference>
<reference key="1">
    <citation type="journal article" date="2002" name="Hum. Mol. Genet.">
        <title>Coding haplotype analysis supports HCR as the putative susceptibility gene for psoriasis at the MHC PSORS1 locus.</title>
        <authorList>
            <person name="Asumalahti K."/>
            <person name="Veal A."/>
            <person name="Laitinen T."/>
            <person name="Suomela S."/>
            <person name="Allen M."/>
            <person name="Elomaa O."/>
            <person name="Moser M."/>
            <person name="de Cid R."/>
            <person name="Ripatti S."/>
            <person name="Vorechovsky I."/>
            <person name="Marcusson J.A."/>
            <person name="Nakagawa H."/>
            <person name="Lazaro C."/>
            <person name="Estivill X."/>
            <person name="Capon F."/>
            <person name="Novelli G."/>
            <person name="Burden D.B."/>
            <person name="Tillman D."/>
            <person name="Powis S.H."/>
            <person name="Balendran N."/>
            <person name="Ameen M."/>
            <person name="Vaughan R.W."/>
            <person name="Heath E.K."/>
            <person name="Itkonen-Vatjus R."/>
            <person name="Jansen C."/>
            <person name="Karvonen J."/>
            <person name="Karvonen S.-L."/>
            <person name="Kivekas K."/>
            <person name="Reunala T."/>
            <person name="Snellman E."/>
            <person name="Uurasmaa T."/>
            <person name="Toftgard R."/>
            <person name="Murakami T."/>
            <person name="Otsuki M."/>
            <person name="Asahina A."/>
            <person name="Saeki H."/>
            <person name="Barbera E."/>
            <person name="Ferrandiz C."/>
            <person name="Gimenez Arnau A."/>
            <person name="Grimalt F."/>
            <person name="Puig S."/>
            <person name="Sanchez A."/>
            <person name="Palacios A."/>
            <person name="Pujol J.A."/>
            <person name="Sanchez M."/>
            <person name="Simal E."/>
            <person name="Vazquez F."/>
            <person name="Ramirez B."/>
            <person name="Saarialho-Kere U."/>
            <person name="Barker J."/>
            <person name="Trembath R."/>
            <person name="Kere J."/>
        </authorList>
    </citation>
    <scope>NUCLEOTIDE SEQUENCE [MRNA] (ISOFORM 1)</scope>
    <scope>VARIANTS GLN-102; TRP-103; TRP-109; ARG-164; ASP-275; TRP-417; CYS-575; GLN-627; HIS-639 AND CYS-776</scope>
</reference>
<reference key="2">
    <citation type="submission" date="1999-09" db="EMBL/GenBank/DDBJ databases">
        <title>Homo sapiens 2,229,817bp genomic DNA of 6p21.3 HLA class I region.</title>
        <authorList>
            <person name="Shiina S."/>
            <person name="Tamiya G."/>
            <person name="Oka A."/>
            <person name="Inoko H."/>
        </authorList>
    </citation>
    <scope>NUCLEOTIDE SEQUENCE [LARGE SCALE GENOMIC DNA]</scope>
    <scope>VARIANTS ARG-164 AND ASP-275</scope>
</reference>
<reference key="3">
    <citation type="submission" date="2002-07" db="EMBL/GenBank/DDBJ databases">
        <title>Genome diversity in HLA: a new strategy for detection of genetic polymorphisms in expressed genes within the HLA class III and class I regions.</title>
        <authorList>
            <person name="Shiina T."/>
            <person name="Ota M."/>
            <person name="Katsuyama Y."/>
            <person name="Hashimoto N."/>
            <person name="Inoko H."/>
        </authorList>
    </citation>
    <scope>NUCLEOTIDE SEQUENCE [LARGE SCALE GENOMIC DNA]</scope>
    <scope>VARIANTS ARG-164 AND ASP-275</scope>
</reference>
<reference key="4">
    <citation type="journal article" date="2004" name="Nat. Genet.">
        <title>Complete sequencing and characterization of 21,243 full-length human cDNAs.</title>
        <authorList>
            <person name="Ota T."/>
            <person name="Suzuki Y."/>
            <person name="Nishikawa T."/>
            <person name="Otsuki T."/>
            <person name="Sugiyama T."/>
            <person name="Irie R."/>
            <person name="Wakamatsu A."/>
            <person name="Hayashi K."/>
            <person name="Sato H."/>
            <person name="Nagai K."/>
            <person name="Kimura K."/>
            <person name="Makita H."/>
            <person name="Sekine M."/>
            <person name="Obayashi M."/>
            <person name="Nishi T."/>
            <person name="Shibahara T."/>
            <person name="Tanaka T."/>
            <person name="Ishii S."/>
            <person name="Yamamoto J."/>
            <person name="Saito K."/>
            <person name="Kawai Y."/>
            <person name="Isono Y."/>
            <person name="Nakamura Y."/>
            <person name="Nagahari K."/>
            <person name="Murakami K."/>
            <person name="Yasuda T."/>
            <person name="Iwayanagi T."/>
            <person name="Wagatsuma M."/>
            <person name="Shiratori A."/>
            <person name="Sudo H."/>
            <person name="Hosoiri T."/>
            <person name="Kaku Y."/>
            <person name="Kodaira H."/>
            <person name="Kondo H."/>
            <person name="Sugawara M."/>
            <person name="Takahashi M."/>
            <person name="Kanda K."/>
            <person name="Yokoi T."/>
            <person name="Furuya T."/>
            <person name="Kikkawa E."/>
            <person name="Omura Y."/>
            <person name="Abe K."/>
            <person name="Kamihara K."/>
            <person name="Katsuta N."/>
            <person name="Sato K."/>
            <person name="Tanikawa M."/>
            <person name="Yamazaki M."/>
            <person name="Ninomiya K."/>
            <person name="Ishibashi T."/>
            <person name="Yamashita H."/>
            <person name="Murakawa K."/>
            <person name="Fujimori K."/>
            <person name="Tanai H."/>
            <person name="Kimata M."/>
            <person name="Watanabe M."/>
            <person name="Hiraoka S."/>
            <person name="Chiba Y."/>
            <person name="Ishida S."/>
            <person name="Ono Y."/>
            <person name="Takiguchi S."/>
            <person name="Watanabe S."/>
            <person name="Yosida M."/>
            <person name="Hotuta T."/>
            <person name="Kusano J."/>
            <person name="Kanehori K."/>
            <person name="Takahashi-Fujii A."/>
            <person name="Hara H."/>
            <person name="Tanase T.-O."/>
            <person name="Nomura Y."/>
            <person name="Togiya S."/>
            <person name="Komai F."/>
            <person name="Hara R."/>
            <person name="Takeuchi K."/>
            <person name="Arita M."/>
            <person name="Imose N."/>
            <person name="Musashino K."/>
            <person name="Yuuki H."/>
            <person name="Oshima A."/>
            <person name="Sasaki N."/>
            <person name="Aotsuka S."/>
            <person name="Yoshikawa Y."/>
            <person name="Matsunawa H."/>
            <person name="Ichihara T."/>
            <person name="Shiohata N."/>
            <person name="Sano S."/>
            <person name="Moriya S."/>
            <person name="Momiyama H."/>
            <person name="Satoh N."/>
            <person name="Takami S."/>
            <person name="Terashima Y."/>
            <person name="Suzuki O."/>
            <person name="Nakagawa S."/>
            <person name="Senoh A."/>
            <person name="Mizoguchi H."/>
            <person name="Goto Y."/>
            <person name="Shimizu F."/>
            <person name="Wakebe H."/>
            <person name="Hishigaki H."/>
            <person name="Watanabe T."/>
            <person name="Sugiyama A."/>
            <person name="Takemoto M."/>
            <person name="Kawakami B."/>
            <person name="Yamazaki M."/>
            <person name="Watanabe K."/>
            <person name="Kumagai A."/>
            <person name="Itakura S."/>
            <person name="Fukuzumi Y."/>
            <person name="Fujimori Y."/>
            <person name="Komiyama M."/>
            <person name="Tashiro H."/>
            <person name="Tanigami A."/>
            <person name="Fujiwara T."/>
            <person name="Ono T."/>
            <person name="Yamada K."/>
            <person name="Fujii Y."/>
            <person name="Ozaki K."/>
            <person name="Hirao M."/>
            <person name="Ohmori Y."/>
            <person name="Kawabata A."/>
            <person name="Hikiji T."/>
            <person name="Kobatake N."/>
            <person name="Inagaki H."/>
            <person name="Ikema Y."/>
            <person name="Okamoto S."/>
            <person name="Okitani R."/>
            <person name="Kawakami T."/>
            <person name="Noguchi S."/>
            <person name="Itoh T."/>
            <person name="Shigeta K."/>
            <person name="Senba T."/>
            <person name="Matsumura K."/>
            <person name="Nakajima Y."/>
            <person name="Mizuno T."/>
            <person name="Morinaga M."/>
            <person name="Sasaki M."/>
            <person name="Togashi T."/>
            <person name="Oyama M."/>
            <person name="Hata H."/>
            <person name="Watanabe M."/>
            <person name="Komatsu T."/>
            <person name="Mizushima-Sugano J."/>
            <person name="Satoh T."/>
            <person name="Shirai Y."/>
            <person name="Takahashi Y."/>
            <person name="Nakagawa K."/>
            <person name="Okumura K."/>
            <person name="Nagase T."/>
            <person name="Nomura N."/>
            <person name="Kikuchi H."/>
            <person name="Masuho Y."/>
            <person name="Yamashita R."/>
            <person name="Nakai K."/>
            <person name="Yada T."/>
            <person name="Nakamura Y."/>
            <person name="Ohara O."/>
            <person name="Isogai T."/>
            <person name="Sugano S."/>
        </authorList>
    </citation>
    <scope>NUCLEOTIDE SEQUENCE [LARGE SCALE MRNA] (ISOFORM 1)</scope>
    <scope>NUCLEOTIDE SEQUENCE [LARGE SCALE MRNA] OF 270-782 (ISOFORMS 1/2)</scope>
    <scope>VARIANTS ASP-275 AND GLN-417</scope>
    <source>
        <tissue>Colon mucosa</tissue>
    </source>
</reference>
<reference key="5">
    <citation type="journal article" date="2003" name="Nature">
        <title>The DNA sequence and analysis of human chromosome 6.</title>
        <authorList>
            <person name="Mungall A.J."/>
            <person name="Palmer S.A."/>
            <person name="Sims S.K."/>
            <person name="Edwards C.A."/>
            <person name="Ashurst J.L."/>
            <person name="Wilming L."/>
            <person name="Jones M.C."/>
            <person name="Horton R."/>
            <person name="Hunt S.E."/>
            <person name="Scott C.E."/>
            <person name="Gilbert J.G.R."/>
            <person name="Clamp M.E."/>
            <person name="Bethel G."/>
            <person name="Milne S."/>
            <person name="Ainscough R."/>
            <person name="Almeida J.P."/>
            <person name="Ambrose K.D."/>
            <person name="Andrews T.D."/>
            <person name="Ashwell R.I.S."/>
            <person name="Babbage A.K."/>
            <person name="Bagguley C.L."/>
            <person name="Bailey J."/>
            <person name="Banerjee R."/>
            <person name="Barker D.J."/>
            <person name="Barlow K.F."/>
            <person name="Bates K."/>
            <person name="Beare D.M."/>
            <person name="Beasley H."/>
            <person name="Beasley O."/>
            <person name="Bird C.P."/>
            <person name="Blakey S.E."/>
            <person name="Bray-Allen S."/>
            <person name="Brook J."/>
            <person name="Brown A.J."/>
            <person name="Brown J.Y."/>
            <person name="Burford D.C."/>
            <person name="Burrill W."/>
            <person name="Burton J."/>
            <person name="Carder C."/>
            <person name="Carter N.P."/>
            <person name="Chapman J.C."/>
            <person name="Clark S.Y."/>
            <person name="Clark G."/>
            <person name="Clee C.M."/>
            <person name="Clegg S."/>
            <person name="Cobley V."/>
            <person name="Collier R.E."/>
            <person name="Collins J.E."/>
            <person name="Colman L.K."/>
            <person name="Corby N.R."/>
            <person name="Coville G.J."/>
            <person name="Culley K.M."/>
            <person name="Dhami P."/>
            <person name="Davies J."/>
            <person name="Dunn M."/>
            <person name="Earthrowl M.E."/>
            <person name="Ellington A.E."/>
            <person name="Evans K.A."/>
            <person name="Faulkner L."/>
            <person name="Francis M.D."/>
            <person name="Frankish A."/>
            <person name="Frankland J."/>
            <person name="French L."/>
            <person name="Garner P."/>
            <person name="Garnett J."/>
            <person name="Ghori M.J."/>
            <person name="Gilby L.M."/>
            <person name="Gillson C.J."/>
            <person name="Glithero R.J."/>
            <person name="Grafham D.V."/>
            <person name="Grant M."/>
            <person name="Gribble S."/>
            <person name="Griffiths C."/>
            <person name="Griffiths M.N.D."/>
            <person name="Hall R."/>
            <person name="Halls K.S."/>
            <person name="Hammond S."/>
            <person name="Harley J.L."/>
            <person name="Hart E.A."/>
            <person name="Heath P.D."/>
            <person name="Heathcott R."/>
            <person name="Holmes S.J."/>
            <person name="Howden P.J."/>
            <person name="Howe K.L."/>
            <person name="Howell G.R."/>
            <person name="Huckle E."/>
            <person name="Humphray S.J."/>
            <person name="Humphries M.D."/>
            <person name="Hunt A.R."/>
            <person name="Johnson C.M."/>
            <person name="Joy A.A."/>
            <person name="Kay M."/>
            <person name="Keenan S.J."/>
            <person name="Kimberley A.M."/>
            <person name="King A."/>
            <person name="Laird G.K."/>
            <person name="Langford C."/>
            <person name="Lawlor S."/>
            <person name="Leongamornlert D.A."/>
            <person name="Leversha M."/>
            <person name="Lloyd C.R."/>
            <person name="Lloyd D.M."/>
            <person name="Loveland J.E."/>
            <person name="Lovell J."/>
            <person name="Martin S."/>
            <person name="Mashreghi-Mohammadi M."/>
            <person name="Maslen G.L."/>
            <person name="Matthews L."/>
            <person name="McCann O.T."/>
            <person name="McLaren S.J."/>
            <person name="McLay K."/>
            <person name="McMurray A."/>
            <person name="Moore M.J.F."/>
            <person name="Mullikin J.C."/>
            <person name="Niblett D."/>
            <person name="Nickerson T."/>
            <person name="Novik K.L."/>
            <person name="Oliver K."/>
            <person name="Overton-Larty E.K."/>
            <person name="Parker A."/>
            <person name="Patel R."/>
            <person name="Pearce A.V."/>
            <person name="Peck A.I."/>
            <person name="Phillimore B.J.C.T."/>
            <person name="Phillips S."/>
            <person name="Plumb R.W."/>
            <person name="Porter K.M."/>
            <person name="Ramsey Y."/>
            <person name="Ranby S.A."/>
            <person name="Rice C.M."/>
            <person name="Ross M.T."/>
            <person name="Searle S.M."/>
            <person name="Sehra H.K."/>
            <person name="Sheridan E."/>
            <person name="Skuce C.D."/>
            <person name="Smith S."/>
            <person name="Smith M."/>
            <person name="Spraggon L."/>
            <person name="Squares S.L."/>
            <person name="Steward C.A."/>
            <person name="Sycamore N."/>
            <person name="Tamlyn-Hall G."/>
            <person name="Tester J."/>
            <person name="Theaker A.J."/>
            <person name="Thomas D.W."/>
            <person name="Thorpe A."/>
            <person name="Tracey A."/>
            <person name="Tromans A."/>
            <person name="Tubby B."/>
            <person name="Wall M."/>
            <person name="Wallis J.M."/>
            <person name="West A.P."/>
            <person name="White S.S."/>
            <person name="Whitehead S.L."/>
            <person name="Whittaker H."/>
            <person name="Wild A."/>
            <person name="Willey D.J."/>
            <person name="Wilmer T.E."/>
            <person name="Wood J.M."/>
            <person name="Wray P.W."/>
            <person name="Wyatt J.C."/>
            <person name="Young L."/>
            <person name="Younger R.M."/>
            <person name="Bentley D.R."/>
            <person name="Coulson A."/>
            <person name="Durbin R.M."/>
            <person name="Hubbard T."/>
            <person name="Sulston J.E."/>
            <person name="Dunham I."/>
            <person name="Rogers J."/>
            <person name="Beck S."/>
        </authorList>
    </citation>
    <scope>NUCLEOTIDE SEQUENCE [LARGE SCALE GENOMIC DNA]</scope>
    <scope>VARIANTS TRP-103; TRP-109; ARG-164; TRP-417; CYS-575 AND CYS-776</scope>
</reference>
<reference key="6">
    <citation type="journal article" date="2004" name="Genome Res.">
        <title>The status, quality, and expansion of the NIH full-length cDNA project: the Mammalian Gene Collection (MGC).</title>
        <authorList>
            <consortium name="The MGC Project Team"/>
        </authorList>
    </citation>
    <scope>NUCLEOTIDE SEQUENCE [LARGE SCALE MRNA] (ISOFORM 2)</scope>
    <scope>VARIANTS TRP-109; ARG-164; TRP-417; CYS-575 AND CYS-776</scope>
</reference>
<reference key="7">
    <citation type="journal article" date="1999" name="Hum. Mol. Genet.">
        <title>Association analysis using refined microsatellite markers localizes a susceptibility locus for psoriasis vulgaris within a 111kb segment telomeric to the HLA-C gene.</title>
        <authorList>
            <person name="Oka A."/>
            <person name="Tamiya G."/>
            <person name="Tomizawa M."/>
            <person name="Ota M."/>
            <person name="Katsuyama Y."/>
            <person name="Makino S."/>
            <person name="Shiina T."/>
            <person name="Yoshitome M."/>
            <person name="Lizuka M."/>
            <person name="Sasao Y."/>
            <person name="Iwashita K."/>
            <person name="Kawakubo Y."/>
            <person name="Sugai J."/>
            <person name="Ozawa A."/>
            <person name="Ohkido M."/>
            <person name="Kimura M."/>
            <person name="Bahram S."/>
            <person name="Inoko H."/>
        </authorList>
    </citation>
    <scope>NUCLEOTIDE SEQUENCE [GENOMIC DNA / MRNA] OF 20-782 (ISOFORMS 1/2)</scope>
    <scope>VARIANTS TRP-103; TRP-109; ARG-164; ASP-275; TRP-417; CYS-575 AND CYS-776</scope>
    <source>
        <tissue>Blood</tissue>
        <tissue>Lymphoblast</tissue>
    </source>
</reference>
<reference key="8">
    <citation type="journal article" date="2000" name="Hum. Mol. Genet.">
        <title>A candidate gene for psoriasis near HLA-C, HCR (Pg8), is highly polymorphic with a disease-associated susceptibility allele.</title>
        <authorList>
            <person name="Asumalahti K."/>
            <person name="Laitinen T."/>
            <person name="Itkonen-Vatjus R."/>
            <person name="Lokki M.-L."/>
            <person name="Suomela S."/>
            <person name="Snellman E."/>
            <person name="Saarialho-Kere U."/>
            <person name="Kere J."/>
        </authorList>
    </citation>
    <scope>NUCLEOTIDE SEQUENCE [MRNA] OF 20-782 (ISOFORMS 1/2)</scope>
    <scope>VARIANTS ARG-164; TRP-417; CYS-575 AND CYS-776</scope>
</reference>
<reference key="9">
    <citation type="journal article" date="2003" name="J. Invest. Dermatol.">
        <title>HCR, a candidate gene for psoriasis, is expressed differently in psoriasis and other hyperproliferative skin disorders and is downregulated by interferon-gamma in keratinocytes.</title>
        <authorList>
            <person name="Suomela S."/>
            <person name="Elomaa O."/>
            <person name="Asumalahti K."/>
            <person name="Kariniemi A.L."/>
            <person name="Karvonen S.L."/>
            <person name="Peltonen J."/>
            <person name="Kere J."/>
            <person name="Saarialho-Kere U."/>
        </authorList>
    </citation>
    <scope>INVOLVEMENT IN PSORIASIS</scope>
</reference>
<reference key="10">
    <citation type="journal article" date="2003" name="Nature">
        <title>Proteomic characterization of the human centrosome by protein correlation profiling.</title>
        <authorList>
            <person name="Andersen J.S."/>
            <person name="Wilkinson C.J."/>
            <person name="Mayor T."/>
            <person name="Mortensen P."/>
            <person name="Nigg E.A."/>
            <person name="Mann M."/>
        </authorList>
    </citation>
    <scope>IDENTIFICATION BY MASS SPECTROMETRY</scope>
    <source>
        <tissue>Lymphoblast</tissue>
    </source>
</reference>
<reference key="11">
    <citation type="journal article" date="2001" name="J. Invest. Dermatol.">
        <title>The HCR gene on 6p21 is unlikely to be a psoriasis susceptibility gene.</title>
        <authorList>
            <person name="O'Brien K.P."/>
            <person name="Holm S.J."/>
            <person name="Nilsson S."/>
            <person name="Carlen L."/>
            <person name="Rosenmuller T."/>
            <person name="Enerbaeck C."/>
            <person name="Inerot A."/>
            <person name="Staahle-Baeckdahl M."/>
        </authorList>
    </citation>
    <scope>VARIANTS GLN-102; TRP-103; TRP-109; ARG-164; GLN-179; ASP-275; THR-367; TRP-417; GLN-417; CYS-575; GLN-627; VAL-733 AND CYS-776</scope>
</reference>
<name>CCHCR_HUMAN</name>
<protein>
    <recommendedName>
        <fullName>Coiled-coil alpha-helical rod protein 1</fullName>
    </recommendedName>
    <alternativeName>
        <fullName>Alpha-helical coiled-coil rod protein</fullName>
    </alternativeName>
    <alternativeName>
        <fullName>Putative gene 8 protein</fullName>
        <shortName>Pg8</shortName>
    </alternativeName>
</protein>
<gene>
    <name type="primary">CCHCR1</name>
    <name type="synonym">C6orf18</name>
    <name type="synonym">HCR</name>
</gene>
<sequence length="782" mass="88671">MFPPSGSTGLIPPSHFQARPLSTLPRMAPTWLSDIPLVQPPGHQDVSERRLDTQRPQVTMWERDVSSDRQEPGRRGRSWGLEGSQALSQQAEVIVRQLQELRRLEEEVRLLRETSLQQKMRLEAQAMELEALARAEKAGRAEAEGLRAALAGAEVVRKNLEEGSQRELEEVQRLHQEQLSSLTQAHEEALSSLTSKAEGLEKSLSSLETRRAGEAKELAEAQREAELLRKQLSKTQEDLEAQVTLVENLRKYVGEQVPSEVHSQTWELERQKLLETMQHLQEDRDSLHATAELLQVRVQSLTHILALQEEELTRKVQPSDSLEPEFTRKCQSLLNRWREKVFALMVQLKAQELEHSDSVKQLKGQVASLQEKVTSQSQEQAILQRSLQDKAAEVEVERMGAKGLQLELSRAQEARRRWQQQTASAEEQLRLVVNAVSSSQIWLETTMAKVEGAAAQLPSLNNRLSYAVRKVHTIRGLIARKLALAQLRQESCPLPPPVTDVSLELQQLREERNRLDAELQLSARLIQQEVGRAREQGEAERQQLSKVAQQLEQELQQTQESLASLGLQLEVARQGQQESTEEAASLRQELTQQQELYGQALQEKVAEVETRLREQLSDTERRLNEARREHAKAVVSLRQIQRRAAQEKERSQELRRLQEEARKEEGQRLARRLQELERDKNLMLATLQQEGLLSRYKQQRLLTVLPSLLDKKKSVVSSPRPPECSASAPVAAAVPTRESIKGSLSVLLDDLQDLSEAISKEEAVCQGDNLDRCSSSNPQMSS</sequence>
<organism>
    <name type="scientific">Homo sapiens</name>
    <name type="common">Human</name>
    <dbReference type="NCBI Taxonomy" id="9606"/>
    <lineage>
        <taxon>Eukaryota</taxon>
        <taxon>Metazoa</taxon>
        <taxon>Chordata</taxon>
        <taxon>Craniata</taxon>
        <taxon>Vertebrata</taxon>
        <taxon>Euteleostomi</taxon>
        <taxon>Mammalia</taxon>
        <taxon>Eutheria</taxon>
        <taxon>Euarchontoglires</taxon>
        <taxon>Primates</taxon>
        <taxon>Haplorrhini</taxon>
        <taxon>Catarrhini</taxon>
        <taxon>Hominidae</taxon>
        <taxon>Homo</taxon>
    </lineage>
</organism>
<accession>Q8TD31</accession>
<accession>A2ABH6</accession>
<accession>E9PE84</accession>
<accession>Q2TB67</accession>
<accession>Q5SQ82</accession>
<accession>Q5STE9</accession>
<accession>Q9NRK8</accession>
<accession>Q9NWY9</accession>
<accession>Q9NXJ4</accession>
<accession>Q9NXK3</accession>
<accession>Q9Y6W1</accession>
<accession>Q9Y6W2</accession>
<comment type="function">
    <text>May be a regulator of keratinocyte proliferation or differentiation.</text>
</comment>
<comment type="interaction">
    <interactant intactId="EBI-949834">
        <id>Q8TD31</id>
    </interactant>
    <interactant intactId="EBI-743598">
        <id>Q9NYB9</id>
        <label>ABI2</label>
    </interactant>
    <organismsDiffer>false</organismsDiffer>
    <experiments>3</experiments>
</comment>
<comment type="interaction">
    <interactant intactId="EBI-949834">
        <id>Q8TD31</id>
    </interactant>
    <interactant intactId="EBI-12206419">
        <id>Q4KMZ1</id>
        <label>IQCC</label>
    </interactant>
    <organismsDiffer>false</organismsDiffer>
    <experiments>3</experiments>
</comment>
<comment type="interaction">
    <interactant intactId="EBI-949834">
        <id>Q8TD31</id>
    </interactant>
    <interactant intactId="EBI-347978">
        <id>P37198</id>
        <label>NUP62</label>
    </interactant>
    <organismsDiffer>false</organismsDiffer>
    <experiments>3</experiments>
</comment>
<comment type="interaction">
    <interactant intactId="EBI-21238948">
        <id>Q8TD31-1</id>
    </interactant>
    <interactant intactId="EBI-14069005">
        <id>Q9BVG8-5</id>
        <label>KIFC3</label>
    </interactant>
    <organismsDiffer>false</organismsDiffer>
    <experiments>4</experiments>
</comment>
<comment type="interaction">
    <interactant intactId="EBI-10175300">
        <id>Q8TD31-3</id>
    </interactant>
    <interactant intactId="EBI-11743294">
        <id>Q8IZP0-5</id>
        <label>ABI1</label>
    </interactant>
    <organismsDiffer>false</organismsDiffer>
    <experiments>5</experiments>
</comment>
<comment type="interaction">
    <interactant intactId="EBI-10175300">
        <id>Q8TD31-3</id>
    </interactant>
    <interactant intactId="EBI-743598">
        <id>Q9NYB9</id>
        <label>ABI2</label>
    </interactant>
    <organismsDiffer>false</organismsDiffer>
    <experiments>3</experiments>
</comment>
<comment type="interaction">
    <interactant intactId="EBI-10175300">
        <id>Q8TD31-3</id>
    </interactant>
    <interactant intactId="EBI-11096309">
        <id>Q9NYB9-2</id>
        <label>ABI2</label>
    </interactant>
    <organismsDiffer>false</organismsDiffer>
    <experiments>3</experiments>
</comment>
<comment type="interaction">
    <interactant intactId="EBI-10175300">
        <id>Q8TD31-3</id>
    </interactant>
    <interactant intactId="EBI-8643161">
        <id>Q9NX04</id>
        <label>AIRIM</label>
    </interactant>
    <organismsDiffer>false</organismsDiffer>
    <experiments>3</experiments>
</comment>
<comment type="interaction">
    <interactant intactId="EBI-10175300">
        <id>Q8TD31-3</id>
    </interactant>
    <interactant intactId="EBI-3905054">
        <id>P13196</id>
        <label>ALAS1</label>
    </interactant>
    <organismsDiffer>false</organismsDiffer>
    <experiments>3</experiments>
</comment>
<comment type="interaction">
    <interactant intactId="EBI-10175300">
        <id>Q8TD31-3</id>
    </interactant>
    <interactant intactId="EBI-746752">
        <id>Q9Y2J4</id>
        <label>AMOTL2</label>
    </interactant>
    <organismsDiffer>false</organismsDiffer>
    <experiments>3</experiments>
</comment>
<comment type="interaction">
    <interactant intactId="EBI-10175300">
        <id>Q8TD31-3</id>
    </interactant>
    <interactant intactId="EBI-10187270">
        <id>Q9Y2J4-4</id>
        <label>AMOTL2</label>
    </interactant>
    <organismsDiffer>false</organismsDiffer>
    <experiments>3</experiments>
</comment>
<comment type="interaction">
    <interactant intactId="EBI-10175300">
        <id>Q8TD31-3</id>
    </interactant>
    <interactant intactId="EBI-17183751">
        <id>X5D778</id>
        <label>ANKRD11</label>
    </interactant>
    <organismsDiffer>false</organismsDiffer>
    <experiments>3</experiments>
</comment>
<comment type="interaction">
    <interactant intactId="EBI-10175300">
        <id>Q8TD31-3</id>
    </interactant>
    <interactant intactId="EBI-10175276">
        <id>A9UGY9</id>
        <label>ATG5</label>
    </interactant>
    <organismsDiffer>false</organismsDiffer>
    <experiments>3</experiments>
</comment>
<comment type="interaction">
    <interactant intactId="EBI-10175300">
        <id>Q8TD31-3</id>
    </interactant>
    <interactant intactId="EBI-1047414">
        <id>Q9H1Y0</id>
        <label>ATG5</label>
    </interactant>
    <organismsDiffer>false</organismsDiffer>
    <experiments>3</experiments>
</comment>
<comment type="interaction">
    <interactant intactId="EBI-10175300">
        <id>Q8TD31-3</id>
    </interactant>
    <interactant intactId="EBI-12123320">
        <id>Q12934-2</id>
        <label>BFSP1</label>
    </interactant>
    <organismsDiffer>false</organismsDiffer>
    <experiments>3</experiments>
</comment>
<comment type="interaction">
    <interactant intactId="EBI-10175300">
        <id>Q8TD31-3</id>
    </interactant>
    <interactant intactId="EBI-11975051">
        <id>Q8TD16-2</id>
        <label>BICD2</label>
    </interactant>
    <organismsDiffer>false</organismsDiffer>
    <experiments>3</experiments>
</comment>
<comment type="interaction">
    <interactant intactId="EBI-10175300">
        <id>Q8TD31-3</id>
    </interactant>
    <interactant intactId="EBI-465872">
        <id>Q6QNY1</id>
        <label>BLOC1S2</label>
    </interactant>
    <organismsDiffer>false</organismsDiffer>
    <experiments>3</experiments>
</comment>
<comment type="interaction">
    <interactant intactId="EBI-10175300">
        <id>Q8TD31-3</id>
    </interactant>
    <interactant intactId="EBI-465781">
        <id>Q9UL45</id>
        <label>BLOC1S6</label>
    </interactant>
    <organismsDiffer>false</organismsDiffer>
    <experiments>3</experiments>
</comment>
<comment type="interaction">
    <interactant intactId="EBI-10175300">
        <id>Q8TD31-3</id>
    </interactant>
    <interactant intactId="EBI-10193358">
        <id>Q96GS4</id>
        <label>BORCS6</label>
    </interactant>
    <organismsDiffer>false</organismsDiffer>
    <experiments>3</experiments>
</comment>
<comment type="interaction">
    <interactant intactId="EBI-10175300">
        <id>Q8TD31-3</id>
    </interactant>
    <interactant intactId="EBI-946029">
        <id>Q6P1W5</id>
        <label>C1orf94</label>
    </interactant>
    <organismsDiffer>false</organismsDiffer>
    <experiments>4</experiments>
</comment>
<comment type="interaction">
    <interactant intactId="EBI-10175300">
        <id>Q8TD31-3</id>
    </interactant>
    <interactant intactId="EBI-751319">
        <id>Q9H257</id>
        <label>CARD9</label>
    </interactant>
    <organismsDiffer>false</organismsDiffer>
    <experiments>3</experiments>
</comment>
<comment type="interaction">
    <interactant intactId="EBI-10175300">
        <id>Q8TD31-3</id>
    </interactant>
    <interactant intactId="EBI-11524851">
        <id>Q8NA61-2</id>
        <label>CBY2</label>
    </interactant>
    <organismsDiffer>false</organismsDiffer>
    <experiments>5</experiments>
</comment>
<comment type="interaction">
    <interactant intactId="EBI-10175300">
        <id>Q8TD31-3</id>
    </interactant>
    <interactant intactId="EBI-10171570">
        <id>Q68D86</id>
        <label>CCDC102B</label>
    </interactant>
    <organismsDiffer>false</organismsDiffer>
    <experiments>6</experiments>
</comment>
<comment type="interaction">
    <interactant intactId="EBI-10175300">
        <id>Q8TD31-3</id>
    </interactant>
    <interactant intactId="EBI-10961312">
        <id>Q8IYE1</id>
        <label>CCDC13</label>
    </interactant>
    <organismsDiffer>false</organismsDiffer>
    <experiments>6</experiments>
</comment>
<comment type="interaction">
    <interactant intactId="EBI-10175300">
        <id>Q8TD31-3</id>
    </interactant>
    <interactant intactId="EBI-10171416">
        <id>Q96JN2-2</id>
        <label>CCDC136</label>
    </interactant>
    <organismsDiffer>false</organismsDiffer>
    <experiments>3</experiments>
</comment>
<comment type="interaction">
    <interactant intactId="EBI-10175300">
        <id>Q8TD31-3</id>
    </interactant>
    <interactant intactId="EBI-750686">
        <id>Q8NCU1</id>
        <label>CCDC197</label>
    </interactant>
    <organismsDiffer>false</organismsDiffer>
    <experiments>3</experiments>
</comment>
<comment type="interaction">
    <interactant intactId="EBI-10175300">
        <id>Q8TD31-3</id>
    </interactant>
    <interactant intactId="EBI-347573">
        <id>A6NC98</id>
        <label>CCDC88B</label>
    </interactant>
    <organismsDiffer>false</organismsDiffer>
    <experiments>3</experiments>
</comment>
<comment type="interaction">
    <interactant intactId="EBI-10175300">
        <id>Q8TD31-3</id>
    </interactant>
    <interactant intactId="EBI-10175300">
        <id>Q8TD31-3</id>
        <label>CCHCR1</label>
    </interactant>
    <organismsDiffer>false</organismsDiffer>
    <experiments>4</experiments>
</comment>
<comment type="interaction">
    <interactant intactId="EBI-10175300">
        <id>Q8TD31-3</id>
    </interactant>
    <interactant intactId="EBI-395261">
        <id>P24863</id>
        <label>CCNC</label>
    </interactant>
    <organismsDiffer>false</organismsDiffer>
    <experiments>3</experiments>
</comment>
<comment type="interaction">
    <interactant intactId="EBI-10175300">
        <id>Q8TD31-3</id>
    </interactant>
    <interactant intactId="EBI-295634">
        <id>Q16543</id>
        <label>CDC37</label>
    </interactant>
    <organismsDiffer>false</organismsDiffer>
    <experiments>3</experiments>
</comment>
<comment type="interaction">
    <interactant intactId="EBI-10175300">
        <id>Q8TD31-3</id>
    </interactant>
    <interactant intactId="EBI-1181367">
        <id>Q01850</id>
        <label>CDR2</label>
    </interactant>
    <organismsDiffer>false</organismsDiffer>
    <experiments>6</experiments>
</comment>
<comment type="interaction">
    <interactant intactId="EBI-10175300">
        <id>Q8TD31-3</id>
    </interactant>
    <interactant intactId="EBI-11063830">
        <id>Q86X02</id>
        <label>CDR2L</label>
    </interactant>
    <organismsDiffer>false</organismsDiffer>
    <experiments>3</experiments>
</comment>
<comment type="interaction">
    <interactant intactId="EBI-10175300">
        <id>Q8TD31-3</id>
    </interactant>
    <interactant intactId="EBI-747776">
        <id>Q53EZ4</id>
        <label>CEP55</label>
    </interactant>
    <organismsDiffer>false</organismsDiffer>
    <experiments>6</experiments>
</comment>
<comment type="interaction">
    <interactant intactId="EBI-10175300">
        <id>Q8TD31-3</id>
    </interactant>
    <interactant intactId="EBI-11752486">
        <id>Q86XR8-3</id>
        <label>CEP57</label>
    </interactant>
    <organismsDiffer>false</organismsDiffer>
    <experiments>3</experiments>
</comment>
<comment type="interaction">
    <interactant intactId="EBI-10175300">
        <id>Q8TD31-3</id>
    </interactant>
    <interactant intactId="EBI-11522539">
        <id>Q96MT8-3</id>
        <label>CEP63</label>
    </interactant>
    <organismsDiffer>false</organismsDiffer>
    <experiments>7</experiments>
</comment>
<comment type="interaction">
    <interactant intactId="EBI-10175300">
        <id>Q8TD31-3</id>
    </interactant>
    <interactant intactId="EBI-742422">
        <id>Q96M91</id>
        <label>CFAP53</label>
    </interactant>
    <organismsDiffer>false</organismsDiffer>
    <experiments>6</experiments>
</comment>
<comment type="interaction">
    <interactant intactId="EBI-10175300">
        <id>Q8TD31-3</id>
    </interactant>
    <interactant intactId="EBI-12093053">
        <id>O43247-2</id>
        <label>CIMIP4</label>
    </interactant>
    <organismsDiffer>false</organismsDiffer>
    <experiments>3</experiments>
</comment>
<comment type="interaction">
    <interactant intactId="EBI-10175300">
        <id>Q8TD31-3</id>
    </interactant>
    <interactant intactId="EBI-743033">
        <id>Q9NZN8</id>
        <label>CNOT2</label>
    </interactant>
    <organismsDiffer>false</organismsDiffer>
    <experiments>3</experiments>
</comment>
<comment type="interaction">
    <interactant intactId="EBI-10175300">
        <id>Q8TD31-3</id>
    </interactant>
    <interactant intactId="EBI-3866319">
        <id>Q9Y2V7</id>
        <label>COG6</label>
    </interactant>
    <organismsDiffer>false</organismsDiffer>
    <experiments>5</experiments>
</comment>
<comment type="interaction">
    <interactant intactId="EBI-10175300">
        <id>Q8TD31-3</id>
    </interactant>
    <interactant intactId="EBI-739773">
        <id>Q9BSW2</id>
        <label>CRACR2A</label>
    </interactant>
    <organismsDiffer>false</organismsDiffer>
    <experiments>3</experiments>
</comment>
<comment type="interaction">
    <interactant intactId="EBI-10175300">
        <id>Q8TD31-3</id>
    </interactant>
    <interactant intactId="EBI-1188472">
        <id>P78358</id>
        <label>CTAG1B</label>
    </interactant>
    <organismsDiffer>false</organismsDiffer>
    <experiments>3</experiments>
</comment>
<comment type="interaction">
    <interactant intactId="EBI-10175300">
        <id>Q8TD31-3</id>
    </interactant>
    <interactant intactId="EBI-748597">
        <id>Q05D60</id>
        <label>DEUP1</label>
    </interactant>
    <organismsDiffer>false</organismsDiffer>
    <experiments>3</experiments>
</comment>
<comment type="interaction">
    <interactant intactId="EBI-10175300">
        <id>Q8TD31-3</id>
    </interactant>
    <interactant intactId="EBI-11988027">
        <id>Q9NRI5-2</id>
        <label>DISC1</label>
    </interactant>
    <organismsDiffer>false</organismsDiffer>
    <experiments>3</experiments>
</comment>
<comment type="interaction">
    <interactant intactId="EBI-10175300">
        <id>Q8TD31-3</id>
    </interactant>
    <interactant intactId="EBI-399105">
        <id>Q9NPF5</id>
        <label>DMAP1</label>
    </interactant>
    <organismsDiffer>false</organismsDiffer>
    <experiments>3</experiments>
</comment>
<comment type="interaction">
    <interactant intactId="EBI-10175300">
        <id>Q8TD31-3</id>
    </interactant>
    <interactant intactId="EBI-11984733">
        <id>O60941-5</id>
        <label>DTNB</label>
    </interactant>
    <organismsDiffer>false</organismsDiffer>
    <experiments>6</experiments>
</comment>
<comment type="interaction">
    <interactant intactId="EBI-10175300">
        <id>Q8TD31-3</id>
    </interactant>
    <interactant intactId="EBI-465804">
        <id>Q96EV8</id>
        <label>DTNBP1</label>
    </interactant>
    <organismsDiffer>false</organismsDiffer>
    <experiments>3</experiments>
</comment>
<comment type="interaction">
    <interactant intactId="EBI-10175300">
        <id>Q8TD31-3</id>
    </interactant>
    <interactant intactId="EBI-740680">
        <id>Q8WWB3</id>
        <label>DYDC1</label>
    </interactant>
    <organismsDiffer>false</organismsDiffer>
    <experiments>3</experiments>
</comment>
<comment type="interaction">
    <interactant intactId="EBI-10175300">
        <id>Q8TD31-3</id>
    </interactant>
    <interactant intactId="EBI-2349927">
        <id>Q5JST6</id>
        <label>EFHC2</label>
    </interactant>
    <organismsDiffer>false</organismsDiffer>
    <experiments>6</experiments>
</comment>
<comment type="interaction">
    <interactant intactId="EBI-10175300">
        <id>Q8TD31-3</id>
    </interactant>
    <interactant intactId="EBI-1045313">
        <id>Q9NV70</id>
        <label>EXOC1</label>
    </interactant>
    <organismsDiffer>false</organismsDiffer>
    <experiments>3</experiments>
</comment>
<comment type="interaction">
    <interactant intactId="EBI-10175300">
        <id>Q8TD31-3</id>
    </interactant>
    <interactant intactId="EBI-17869840">
        <id>Q96A65-2</id>
        <label>EXOC4</label>
    </interactant>
    <organismsDiffer>false</organismsDiffer>
    <experiments>3</experiments>
</comment>
<comment type="interaction">
    <interactant intactId="EBI-10175300">
        <id>Q8TD31-3</id>
    </interactant>
    <interactant intactId="EBI-6251402">
        <id>Q9UPT5-1</id>
        <label>EXOC7</label>
    </interactant>
    <organismsDiffer>false</organismsDiffer>
    <experiments>3</experiments>
</comment>
<comment type="interaction">
    <interactant intactId="EBI-10175300">
        <id>Q8TD31-3</id>
    </interactant>
    <interactant intactId="EBI-742102">
        <id>Q8IYI6</id>
        <label>EXOC8</label>
    </interactant>
    <organismsDiffer>false</organismsDiffer>
    <experiments>3</experiments>
</comment>
<comment type="interaction">
    <interactant intactId="EBI-10175300">
        <id>Q8TD31-3</id>
    </interactant>
    <interactant intactId="EBI-81610">
        <id>O15287</id>
        <label>FANCG</label>
    </interactant>
    <organismsDiffer>false</organismsDiffer>
    <experiments>3</experiments>
</comment>
<comment type="interaction">
    <interactant intactId="EBI-10175300">
        <id>Q8TD31-3</id>
    </interactant>
    <interactant intactId="EBI-11958845">
        <id>O94868-3</id>
        <label>FCHSD2</label>
    </interactant>
    <organismsDiffer>false</organismsDiffer>
    <experiments>5</experiments>
</comment>
<comment type="interaction">
    <interactant intactId="EBI-10175300">
        <id>Q8TD31-3</id>
    </interactant>
    <interactant intactId="EBI-5661036">
        <id>A1L4K1</id>
        <label>FSD2</label>
    </interactant>
    <organismsDiffer>false</organismsDiffer>
    <experiments>6</experiments>
</comment>
<comment type="interaction">
    <interactant intactId="EBI-10175300">
        <id>Q8TD31-3</id>
    </interactant>
    <interactant intactId="EBI-1052570">
        <id>O95995</id>
        <label>GAS8</label>
    </interactant>
    <organismsDiffer>false</organismsDiffer>
    <experiments>3</experiments>
</comment>
<comment type="interaction">
    <interactant intactId="EBI-10175300">
        <id>Q8TD31-3</id>
    </interactant>
    <interactant intactId="EBI-11427343">
        <id>Q9P2W3</id>
        <label>GNG13</label>
    </interactant>
    <organismsDiffer>false</organismsDiffer>
    <experiments>3</experiments>
</comment>
<comment type="interaction">
    <interactant intactId="EBI-10175300">
        <id>Q8TD31-3</id>
    </interactant>
    <interactant intactId="EBI-618309">
        <id>Q08379</id>
        <label>GOLGA2</label>
    </interactant>
    <organismsDiffer>false</organismsDiffer>
    <experiments>8</experiments>
</comment>
<comment type="interaction">
    <interactant intactId="EBI-10175300">
        <id>Q8TD31-3</id>
    </interactant>
    <interactant intactId="EBI-5916454">
        <id>A6NEM1</id>
        <label>GOLGA6L9</label>
    </interactant>
    <organismsDiffer>false</organismsDiffer>
    <experiments>3</experiments>
</comment>
<comment type="interaction">
    <interactant intactId="EBI-10175300">
        <id>Q8TD31-3</id>
    </interactant>
    <interactant intactId="EBI-2514791">
        <id>Q96CS2</id>
        <label>HAUS1</label>
    </interactant>
    <organismsDiffer>false</organismsDiffer>
    <experiments>6</experiments>
</comment>
<comment type="interaction">
    <interactant intactId="EBI-10175300">
        <id>Q8TD31-3</id>
    </interactant>
    <interactant intactId="EBI-2558143">
        <id>Q9BT25</id>
        <label>HAUS8</label>
    </interactant>
    <organismsDiffer>false</organismsDiffer>
    <experiments>5</experiments>
</comment>
<comment type="interaction">
    <interactant intactId="EBI-10175300">
        <id>Q8TD31-3</id>
    </interactant>
    <interactant intactId="EBI-12037393">
        <id>Q8N4P3-2</id>
        <label>HDDC3</label>
    </interactant>
    <organismsDiffer>false</organismsDiffer>
    <experiments>3</experiments>
</comment>
<comment type="interaction">
    <interactant intactId="EBI-10175300">
        <id>Q8TD31-3</id>
    </interactant>
    <interactant intactId="EBI-1041722">
        <id>Q04756</id>
        <label>HGFAC</label>
    </interactant>
    <organismsDiffer>false</organismsDiffer>
    <experiments>3</experiments>
</comment>
<comment type="interaction">
    <interactant intactId="EBI-10175300">
        <id>Q8TD31-3</id>
    </interactant>
    <interactant intactId="EBI-7261162">
        <id>Q9UGU5</id>
        <label>HMGXB4</label>
    </interactant>
    <organismsDiffer>false</organismsDiffer>
    <experiments>3</experiments>
</comment>
<comment type="interaction">
    <interactant intactId="EBI-10175300">
        <id>Q8TD31-3</id>
    </interactant>
    <interactant intactId="EBI-748664">
        <id>O75506</id>
        <label>HSBP1</label>
    </interactant>
    <organismsDiffer>false</organismsDiffer>
    <experiments>6</experiments>
</comment>
<comment type="interaction">
    <interactant intactId="EBI-10175300">
        <id>Q8TD31-3</id>
    </interactant>
    <interactant intactId="EBI-7116203">
        <id>O75031</id>
        <label>HSF2BP</label>
    </interactant>
    <organismsDiffer>false</organismsDiffer>
    <experiments>3</experiments>
</comment>
<comment type="interaction">
    <interactant intactId="EBI-10175300">
        <id>Q8TD31-3</id>
    </interactant>
    <interactant intactId="EBI-9091197">
        <id>Q8IY31-3</id>
        <label>IFT20</label>
    </interactant>
    <organismsDiffer>false</organismsDiffer>
    <experiments>3</experiments>
</comment>
<comment type="interaction">
    <interactant intactId="EBI-10175300">
        <id>Q8TD31-3</id>
    </interactant>
    <interactant intactId="EBI-747204">
        <id>Q9UKT9</id>
        <label>IKZF3</label>
    </interactant>
    <organismsDiffer>false</organismsDiffer>
    <experiments>3</experiments>
</comment>
<comment type="interaction">
    <interactant intactId="EBI-10175300">
        <id>Q8TD31-3</id>
    </interactant>
    <interactant intactId="EBI-488533">
        <id>Q8WYH8</id>
        <label>ING5</label>
    </interactant>
    <organismsDiffer>false</organismsDiffer>
    <experiments>3</experiments>
</comment>
<comment type="interaction">
    <interactant intactId="EBI-10175300">
        <id>Q8TD31-3</id>
    </interactant>
    <interactant intactId="EBI-12206419">
        <id>Q4KMZ1</id>
        <label>IQCC</label>
    </interactant>
    <organismsDiffer>false</organismsDiffer>
    <experiments>3</experiments>
</comment>
<comment type="interaction">
    <interactant intactId="EBI-10175300">
        <id>Q8TD31-3</id>
    </interactant>
    <interactant intactId="EBI-2805604">
        <id>Q2KHM9</id>
        <label>KIAA0753</label>
    </interactant>
    <organismsDiffer>false</organismsDiffer>
    <experiments>3</experiments>
</comment>
<comment type="interaction">
    <interactant intactId="EBI-10175300">
        <id>Q8TD31-3</id>
    </interactant>
    <interactant intactId="EBI-3437878">
        <id>Q86T90</id>
        <label>KIAA1328</label>
    </interactant>
    <organismsDiffer>false</organismsDiffer>
    <experiments>3</experiments>
</comment>
<comment type="interaction">
    <interactant intactId="EBI-10175300">
        <id>Q8TD31-3</id>
    </interactant>
    <interactant intactId="EBI-14069005">
        <id>Q9BVG8-5</id>
        <label>KIFC3</label>
    </interactant>
    <organismsDiffer>false</organismsDiffer>
    <experiments>3</experiments>
</comment>
<comment type="interaction">
    <interactant intactId="EBI-10175300">
        <id>Q8TD31-3</id>
    </interactant>
    <interactant intactId="EBI-10171552">
        <id>A1A4E9</id>
        <label>KRT13</label>
    </interactant>
    <organismsDiffer>false</organismsDiffer>
    <experiments>3</experiments>
</comment>
<comment type="interaction">
    <interactant intactId="EBI-10175300">
        <id>Q8TD31-3</id>
    </interactant>
    <interactant intactId="EBI-739566">
        <id>P19012</id>
        <label>KRT15</label>
    </interactant>
    <organismsDiffer>false</organismsDiffer>
    <experiments>6</experiments>
</comment>
<comment type="interaction">
    <interactant intactId="EBI-10175300">
        <id>Q8TD31-3</id>
    </interactant>
    <interactant intactId="EBI-356410">
        <id>P08779</id>
        <label>KRT16</label>
    </interactant>
    <organismsDiffer>false</organismsDiffer>
    <experiments>3</experiments>
</comment>
<comment type="interaction">
    <interactant intactId="EBI-10175300">
        <id>Q8TD31-3</id>
    </interactant>
    <interactant intactId="EBI-297888">
        <id>P05783</id>
        <label>KRT18</label>
    </interactant>
    <organismsDiffer>false</organismsDiffer>
    <experiments>3</experiments>
</comment>
<comment type="interaction">
    <interactant intactId="EBI-10175300">
        <id>Q8TD31-3</id>
    </interactant>
    <interactant intactId="EBI-742756">
        <id>P08727</id>
        <label>KRT19</label>
    </interactant>
    <organismsDiffer>false</organismsDiffer>
    <experiments>3</experiments>
</comment>
<comment type="interaction">
    <interactant intactId="EBI-10175300">
        <id>Q8TD31-3</id>
    </interactant>
    <interactant intactId="EBI-2952736">
        <id>Q2M2I5</id>
        <label>KRT24</label>
    </interactant>
    <organismsDiffer>false</organismsDiffer>
    <experiments>3</experiments>
</comment>
<comment type="interaction">
    <interactant intactId="EBI-10175300">
        <id>Q8TD31-3</id>
    </interactant>
    <interactant intactId="EBI-3044087">
        <id>Q7Z3Y8</id>
        <label>KRT27</label>
    </interactant>
    <organismsDiffer>false</organismsDiffer>
    <experiments>3</experiments>
</comment>
<comment type="interaction">
    <interactant intactId="EBI-10175300">
        <id>Q8TD31-3</id>
    </interactant>
    <interactant intactId="EBI-948001">
        <id>Q15323</id>
        <label>KRT31</label>
    </interactant>
    <organismsDiffer>false</organismsDiffer>
    <experiments>6</experiments>
</comment>
<comment type="interaction">
    <interactant intactId="EBI-10175300">
        <id>Q8TD31-3</id>
    </interactant>
    <interactant intactId="EBI-1047093">
        <id>O76011</id>
        <label>KRT34</label>
    </interactant>
    <organismsDiffer>false</organismsDiffer>
    <experiments>3</experiments>
</comment>
<comment type="interaction">
    <interactant intactId="EBI-10175300">
        <id>Q8TD31-3</id>
    </interactant>
    <interactant intactId="EBI-1058674">
        <id>Q92764</id>
        <label>KRT35</label>
    </interactant>
    <organismsDiffer>false</organismsDiffer>
    <experiments>3</experiments>
</comment>
<comment type="interaction">
    <interactant intactId="EBI-10175300">
        <id>Q8TD31-3</id>
    </interactant>
    <interactant intactId="EBI-11958506">
        <id>O76013-2</id>
        <label>KRT36</label>
    </interactant>
    <organismsDiffer>false</organismsDiffer>
    <experiments>3</experiments>
</comment>
<comment type="interaction">
    <interactant intactId="EBI-10175300">
        <id>Q8TD31-3</id>
    </interactant>
    <interactant intactId="EBI-10171697">
        <id>Q6A162</id>
        <label>KRT40</label>
    </interactant>
    <organismsDiffer>false</organismsDiffer>
    <experiments>6</experiments>
</comment>
<comment type="interaction">
    <interactant intactId="EBI-10175300">
        <id>Q8TD31-3</id>
    </interactant>
    <interactant intactId="EBI-2949715">
        <id>O95678</id>
        <label>KRT75</label>
    </interactant>
    <organismsDiffer>false</organismsDiffer>
    <experiments>3</experiments>
</comment>
<comment type="interaction">
    <interactant intactId="EBI-10175300">
        <id>Q8TD31-3</id>
    </interactant>
    <interactant intactId="EBI-726510">
        <id>Q96BZ8</id>
        <label>LENG1</label>
    </interactant>
    <organismsDiffer>false</organismsDiffer>
    <experiments>3</experiments>
</comment>
<comment type="interaction">
    <interactant intactId="EBI-10175300">
        <id>Q8TD31-3</id>
    </interactant>
    <interactant intactId="EBI-8474075">
        <id>Q68G74</id>
        <label>LHX8</label>
    </interactant>
    <organismsDiffer>false</organismsDiffer>
    <experiments>3</experiments>
</comment>
<comment type="interaction">
    <interactant intactId="EBI-10175300">
        <id>Q8TD31-3</id>
    </interactant>
    <interactant intactId="EBI-1216080">
        <id>Q9Y250</id>
        <label>LZTS1</label>
    </interactant>
    <organismsDiffer>false</organismsDiffer>
    <experiments>3</experiments>
</comment>
<comment type="interaction">
    <interactant intactId="EBI-10175300">
        <id>Q8TD31-3</id>
    </interactant>
    <interactant intactId="EBI-742610">
        <id>Q9Y6D9</id>
        <label>MAD1L1</label>
    </interactant>
    <organismsDiffer>false</organismsDiffer>
    <experiments>6</experiments>
</comment>
<comment type="interaction">
    <interactant intactId="EBI-10175300">
        <id>Q8TD31-3</id>
    </interactant>
    <interactant intactId="EBI-11978579">
        <id>O95983-2</id>
        <label>MBD3</label>
    </interactant>
    <organismsDiffer>false</organismsDiffer>
    <experiments>3</experiments>
</comment>
<comment type="interaction">
    <interactant intactId="EBI-10175300">
        <id>Q8TD31-3</id>
    </interactant>
    <interactant intactId="EBI-348259">
        <id>Q96EZ8</id>
        <label>MCRS1</label>
    </interactant>
    <organismsDiffer>false</organismsDiffer>
    <experiments>3</experiments>
</comment>
<comment type="interaction">
    <interactant intactId="EBI-10175300">
        <id>Q8TD31-3</id>
    </interactant>
    <interactant intactId="EBI-394607">
        <id>Q9NPJ6</id>
        <label>MED4</label>
    </interactant>
    <organismsDiffer>false</organismsDiffer>
    <experiments>6</experiments>
</comment>
<comment type="interaction">
    <interactant intactId="EBI-10175300">
        <id>Q8TD31-3</id>
    </interactant>
    <interactant intactId="EBI-1050253">
        <id>Q96PC5</id>
        <label>MIA2</label>
    </interactant>
    <organismsDiffer>false</organismsDiffer>
    <experiments>3</experiments>
</comment>
<comment type="interaction">
    <interactant intactId="EBI-10175300">
        <id>Q8TD31-3</id>
    </interactant>
    <interactant intactId="EBI-10172526">
        <id>Q9UJV3-2</id>
        <label>MID2</label>
    </interactant>
    <organismsDiffer>false</organismsDiffer>
    <experiments>6</experiments>
</comment>
<comment type="interaction">
    <interactant intactId="EBI-10175300">
        <id>Q8TD31-3</id>
    </interactant>
    <interactant intactId="EBI-742948">
        <id>Q5JR59</id>
        <label>MTUS2</label>
    </interactant>
    <organismsDiffer>false</organismsDiffer>
    <experiments>3</experiments>
</comment>
<comment type="interaction">
    <interactant intactId="EBI-10175300">
        <id>Q8TD31-3</id>
    </interactant>
    <interactant intactId="EBI-11522433">
        <id>Q5JR59-3</id>
        <label>MTUS2</label>
    </interactant>
    <organismsDiffer>false</organismsDiffer>
    <experiments>3</experiments>
</comment>
<comment type="interaction">
    <interactant intactId="EBI-10175300">
        <id>Q8TD31-3</id>
    </interactant>
    <interactant intactId="EBI-8641936">
        <id>Q15742</id>
        <label>NAB2</label>
    </interactant>
    <organismsDiffer>false</organismsDiffer>
    <experiments>3</experiments>
</comment>
<comment type="interaction">
    <interactant intactId="EBI-10175300">
        <id>Q8TD31-3</id>
    </interactant>
    <interactant intactId="EBI-715849">
        <id>O14777</id>
        <label>NDC80</label>
    </interactant>
    <organismsDiffer>false</organismsDiffer>
    <experiments>6</experiments>
</comment>
<comment type="interaction">
    <interactant intactId="EBI-10175300">
        <id>Q8TD31-3</id>
    </interactant>
    <interactant intactId="EBI-928842">
        <id>Q9GZM8</id>
        <label>NDEL1</label>
    </interactant>
    <organismsDiffer>false</organismsDiffer>
    <experiments>3</experiments>
</comment>
<comment type="interaction">
    <interactant intactId="EBI-10175300">
        <id>Q8TD31-3</id>
    </interactant>
    <interactant intactId="EBI-10271199">
        <id>Q8NI38</id>
        <label>NFKBID</label>
    </interactant>
    <organismsDiffer>false</organismsDiffer>
    <experiments>3</experiments>
</comment>
<comment type="interaction">
    <interactant intactId="EBI-10175300">
        <id>Q8TD31-3</id>
    </interactant>
    <interactant intactId="EBI-719716">
        <id>Q9Y2I6</id>
        <label>NINL</label>
    </interactant>
    <organismsDiffer>false</organismsDiffer>
    <experiments>3</experiments>
</comment>
<comment type="interaction">
    <interactant intactId="EBI-10175300">
        <id>Q8TD31-3</id>
    </interactant>
    <interactant intactId="EBI-744782">
        <id>Q9Y5B8</id>
        <label>NME7</label>
    </interactant>
    <organismsDiffer>false</organismsDiffer>
    <experiments>6</experiments>
</comment>
<comment type="interaction">
    <interactant intactId="EBI-10175300">
        <id>Q8TD31-3</id>
    </interactant>
    <interactant intactId="EBI-741158">
        <id>Q96HA8</id>
        <label>NTAQ1</label>
    </interactant>
    <organismsDiffer>false</organismsDiffer>
    <experiments>3</experiments>
</comment>
<comment type="interaction">
    <interactant intactId="EBI-10175300">
        <id>Q8TD31-3</id>
    </interactant>
    <interactant intactId="EBI-741048">
        <id>Q7Z3B4</id>
        <label>NUP54</label>
    </interactant>
    <organismsDiffer>false</organismsDiffer>
    <experiments>3</experiments>
</comment>
<comment type="interaction">
    <interactant intactId="EBI-10175300">
        <id>Q8TD31-3</id>
    </interactant>
    <interactant intactId="EBI-347978">
        <id>P37198</id>
        <label>NUP62</label>
    </interactant>
    <organismsDiffer>false</organismsDiffer>
    <experiments>6</experiments>
</comment>
<comment type="interaction">
    <interactant intactId="EBI-10175300">
        <id>Q8TD31-3</id>
    </interactant>
    <interactant intactId="EBI-10178410">
        <id>Q86Y26</id>
        <label>NUTM1</label>
    </interactant>
    <organismsDiffer>false</organismsDiffer>
    <experiments>3</experiments>
</comment>
<comment type="interaction">
    <interactant intactId="EBI-10175300">
        <id>Q8TD31-3</id>
    </interactant>
    <interactant intactId="EBI-536879">
        <id>O43482</id>
        <label>OIP5</label>
    </interactant>
    <organismsDiffer>false</organismsDiffer>
    <experiments>3</experiments>
</comment>
<comment type="interaction">
    <interactant intactId="EBI-10175300">
        <id>Q8TD31-3</id>
    </interactant>
    <interactant intactId="EBI-11742977">
        <id>Q15154-3</id>
        <label>PCM1</label>
    </interactant>
    <organismsDiffer>false</organismsDiffer>
    <experiments>5</experiments>
</comment>
<comment type="interaction">
    <interactant intactId="EBI-10175300">
        <id>Q8TD31-3</id>
    </interactant>
    <interactant intactId="EBI-356973">
        <id>O15212</id>
        <label>PFDN6</label>
    </interactant>
    <organismsDiffer>false</organismsDiffer>
    <experiments>3</experiments>
</comment>
<comment type="interaction">
    <interactant intactId="EBI-10175300">
        <id>Q8TD31-3</id>
    </interactant>
    <interactant intactId="EBI-348555">
        <id>O75928</id>
        <label>PIAS2</label>
    </interactant>
    <organismsDiffer>false</organismsDiffer>
    <experiments>3</experiments>
</comment>
<comment type="interaction">
    <interactant intactId="EBI-10175300">
        <id>Q8TD31-3</id>
    </interactant>
    <interactant intactId="EBI-14066006">
        <id>Q4G0R1</id>
        <label>PIBF1</label>
    </interactant>
    <organismsDiffer>false</organismsDiffer>
    <experiments>3</experiments>
</comment>
<comment type="interaction">
    <interactant intactId="EBI-10175300">
        <id>Q8TD31-3</id>
    </interactant>
    <interactant intactId="EBI-10987518">
        <id>Q99959-2</id>
        <label>PKP2</label>
    </interactant>
    <organismsDiffer>false</organismsDiffer>
    <experiments>3</experiments>
</comment>
<comment type="interaction">
    <interactant intactId="EBI-10175300">
        <id>Q8TD31-3</id>
    </interactant>
    <interactant intactId="EBI-12069346">
        <id>Q6IQ23-2</id>
        <label>PLEKHA7</label>
    </interactant>
    <organismsDiffer>false</organismsDiffer>
    <experiments>3</experiments>
</comment>
<comment type="interaction">
    <interactant intactId="EBI-10175300">
        <id>Q8TD31-3</id>
    </interactant>
    <interactant intactId="EBI-12029004">
        <id>P78424</id>
        <label>POU6F2</label>
    </interactant>
    <organismsDiffer>false</organismsDiffer>
    <experiments>3</experiments>
</comment>
<comment type="interaction">
    <interactant intactId="EBI-10175300">
        <id>Q8TD31-3</id>
    </interactant>
    <interactant intactId="EBI-1105153">
        <id>Q96KQ4</id>
        <label>PPP1R13B</label>
    </interactant>
    <organismsDiffer>false</organismsDiffer>
    <experiments>3</experiments>
</comment>
<comment type="interaction">
    <interactant intactId="EBI-10175300">
        <id>Q8TD31-3</id>
    </interactant>
    <interactant intactId="EBI-11320284">
        <id>Q9NQX0</id>
        <label>PRDM6</label>
    </interactant>
    <organismsDiffer>false</organismsDiffer>
    <experiments>3</experiments>
</comment>
<comment type="interaction">
    <interactant intactId="EBI-10175300">
        <id>Q8TD31-3</id>
    </interactant>
    <interactant intactId="EBI-11336487">
        <id>Q2NL68</id>
        <label>PROSER3</label>
    </interactant>
    <organismsDiffer>false</organismsDiffer>
    <experiments>5</experiments>
</comment>
<comment type="interaction">
    <interactant intactId="EBI-10175300">
        <id>Q8TD31-3</id>
    </interactant>
    <interactant intactId="EBI-14093916">
        <id>Q9UJ41-4</id>
        <label>RABGEF1</label>
    </interactant>
    <organismsDiffer>false</organismsDiffer>
    <experiments>3</experiments>
</comment>
<comment type="interaction">
    <interactant intactId="EBI-10175300">
        <id>Q8TD31-3</id>
    </interactant>
    <interactant intactId="EBI-749285">
        <id>Q15311</id>
        <label>RALBP1</label>
    </interactant>
    <organismsDiffer>false</organismsDiffer>
    <experiments>3</experiments>
</comment>
<comment type="interaction">
    <interactant intactId="EBI-10175300">
        <id>Q8TD31-3</id>
    </interactant>
    <interactant intactId="EBI-740272">
        <id>Q96I25</id>
        <label>RBM17</label>
    </interactant>
    <organismsDiffer>false</organismsDiffer>
    <experiments>6</experiments>
</comment>
<comment type="interaction">
    <interactant intactId="EBI-10175300">
        <id>Q8TD31-3</id>
    </interactant>
    <interactant intactId="EBI-740773">
        <id>Q96IZ5</id>
        <label>RBM41</label>
    </interactant>
    <organismsDiffer>false</organismsDiffer>
    <experiments>3</experiments>
</comment>
<comment type="interaction">
    <interactant intactId="EBI-10175300">
        <id>Q8TD31-3</id>
    </interactant>
    <interactant intactId="EBI-1504830">
        <id>Q9P2K3-2</id>
        <label>RCOR3</label>
    </interactant>
    <organismsDiffer>false</organismsDiffer>
    <experiments>3</experiments>
</comment>
<comment type="interaction">
    <interactant intactId="EBI-10175300">
        <id>Q8TD31-3</id>
    </interactant>
    <interactant intactId="EBI-726876">
        <id>Q6NUQ1</id>
        <label>RINT1</label>
    </interactant>
    <organismsDiffer>false</organismsDiffer>
    <experiments>5</experiments>
</comment>
<comment type="interaction">
    <interactant intactId="EBI-10175300">
        <id>Q8TD31-3</id>
    </interactant>
    <interactant intactId="EBI-6257312">
        <id>Q9BVN2</id>
        <label>RUSC1</label>
    </interactant>
    <organismsDiffer>false</organismsDiffer>
    <experiments>3</experiments>
</comment>
<comment type="interaction">
    <interactant intactId="EBI-10175300">
        <id>Q8TD31-3</id>
    </interactant>
    <interactant intactId="EBI-14067109">
        <id>Q96NU1</id>
        <label>SAMD11</label>
    </interactant>
    <organismsDiffer>false</organismsDiffer>
    <experiments>3</experiments>
</comment>
<comment type="interaction">
    <interactant intactId="EBI-10175300">
        <id>Q8TD31-3</id>
    </interactant>
    <interactant intactId="EBI-711613">
        <id>P21673</id>
        <label>SAT1</label>
    </interactant>
    <organismsDiffer>false</organismsDiffer>
    <experiments>6</experiments>
</comment>
<comment type="interaction">
    <interactant intactId="EBI-10175300">
        <id>Q8TD31-3</id>
    </interactant>
    <interactant intactId="EBI-455078">
        <id>Q969G3</id>
        <label>SMARCE1</label>
    </interactant>
    <organismsDiffer>false</organismsDiffer>
    <experiments>3</experiments>
</comment>
<comment type="interaction">
    <interactant intactId="EBI-10175300">
        <id>Q8TD31-3</id>
    </interactant>
    <interactant intactId="EBI-741237">
        <id>O60504</id>
        <label>SORBS3</label>
    </interactant>
    <organismsDiffer>false</organismsDiffer>
    <experiments>3</experiments>
</comment>
<comment type="interaction">
    <interactant intactId="EBI-10175300">
        <id>Q8TD31-3</id>
    </interactant>
    <interactant intactId="EBI-413317">
        <id>Q96R06</id>
        <label>SPAG5</label>
    </interactant>
    <organismsDiffer>false</organismsDiffer>
    <experiments>6</experiments>
</comment>
<comment type="interaction">
    <interactant intactId="EBI-10175300">
        <id>Q8TD31-3</id>
    </interactant>
    <interactant intactId="EBI-742688">
        <id>Q9NZD8</id>
        <label>SPG21</label>
    </interactant>
    <organismsDiffer>false</organismsDiffer>
    <experiments>3</experiments>
</comment>
<comment type="interaction">
    <interactant intactId="EBI-10175300">
        <id>Q8TD31-3</id>
    </interactant>
    <interactant intactId="EBI-2212028">
        <id>Q9Y2D8</id>
        <label>SSX2IP</label>
    </interactant>
    <organismsDiffer>false</organismsDiffer>
    <experiments>3</experiments>
</comment>
<comment type="interaction">
    <interactant intactId="EBI-10175300">
        <id>Q8TD31-3</id>
    </interactant>
    <interactant intactId="EBI-17217258">
        <id>Q96DR4</id>
        <label>STARD4</label>
    </interactant>
    <organismsDiffer>false</organismsDiffer>
    <experiments>3</experiments>
</comment>
<comment type="interaction">
    <interactant intactId="EBI-10175300">
        <id>Q8TD31-3</id>
    </interactant>
    <interactant intactId="EBI-714194">
        <id>Q93045</id>
        <label>STMN2</label>
    </interactant>
    <organismsDiffer>false</organismsDiffer>
    <experiments>3</experiments>
</comment>
<comment type="interaction">
    <interactant intactId="EBI-10175300">
        <id>Q8TD31-3</id>
    </interactant>
    <interactant intactId="EBI-714135">
        <id>O75558</id>
        <label>STX11</label>
    </interactant>
    <organismsDiffer>false</organismsDiffer>
    <experiments>3</experiments>
</comment>
<comment type="interaction">
    <interactant intactId="EBI-10175300">
        <id>Q8TD31-3</id>
    </interactant>
    <interactant intactId="EBI-6872807">
        <id>Q8N0S2</id>
        <label>SYCE1</label>
    </interactant>
    <organismsDiffer>false</organismsDiffer>
    <experiments>3</experiments>
</comment>
<comment type="interaction">
    <interactant intactId="EBI-10175300">
        <id>Q8TD31-3</id>
    </interactant>
    <interactant intactId="EBI-2554984">
        <id>Q9Y6A5</id>
        <label>TACC3</label>
    </interactant>
    <organismsDiffer>false</organismsDiffer>
    <experiments>3</experiments>
</comment>
<comment type="interaction">
    <interactant intactId="EBI-10175300">
        <id>Q8TD31-3</id>
    </interactant>
    <interactant intactId="EBI-742268">
        <id>O75478</id>
        <label>TADA2A</label>
    </interactant>
    <organismsDiffer>false</organismsDiffer>
    <experiments>3</experiments>
</comment>
<comment type="interaction">
    <interactant intactId="EBI-10175300">
        <id>Q8TD31-3</id>
    </interactant>
    <interactant intactId="EBI-10180409">
        <id>Q969V4</id>
        <label>TEKT1</label>
    </interactant>
    <organismsDiffer>false</organismsDiffer>
    <experiments>6</experiments>
</comment>
<comment type="interaction">
    <interactant intactId="EBI-10175300">
        <id>Q8TD31-3</id>
    </interactant>
    <interactant intactId="EBI-746341">
        <id>Q8N6V9</id>
        <label>TEX9</label>
    </interactant>
    <organismsDiffer>false</organismsDiffer>
    <experiments>3</experiments>
</comment>
<comment type="interaction">
    <interactant intactId="EBI-10175300">
        <id>Q8TD31-3</id>
    </interactant>
    <interactant intactId="EBI-1105213">
        <id>Q9UBB9</id>
        <label>TFIP11</label>
    </interactant>
    <organismsDiffer>false</organismsDiffer>
    <experiments>8</experiments>
</comment>
<comment type="interaction">
    <interactant intactId="EBI-10175300">
        <id>Q8TD31-3</id>
    </interactant>
    <interactant intactId="EBI-12123928">
        <id>P09493-10</id>
        <label>TPM1</label>
    </interactant>
    <organismsDiffer>false</organismsDiffer>
    <experiments>3</experiments>
</comment>
<comment type="interaction">
    <interactant intactId="EBI-10175300">
        <id>Q8TD31-3</id>
    </interactant>
    <interactant intactId="EBI-355607">
        <id>P06753</id>
        <label>TPM3</label>
    </interactant>
    <organismsDiffer>false</organismsDiffer>
    <experiments>13</experiments>
</comment>
<comment type="interaction">
    <interactant intactId="EBI-10175300">
        <id>Q8TD31-3</id>
    </interactant>
    <interactant intactId="EBI-10184033">
        <id>Q5VU62</id>
        <label>TPM3</label>
    </interactant>
    <organismsDiffer>false</organismsDiffer>
    <experiments>3</experiments>
</comment>
<comment type="interaction">
    <interactant intactId="EBI-10175300">
        <id>Q8TD31-3</id>
    </interactant>
    <interactant intactId="EBI-359224">
        <id>Q13077</id>
        <label>TRAF1</label>
    </interactant>
    <organismsDiffer>false</organismsDiffer>
    <experiments>6</experiments>
</comment>
<comment type="interaction">
    <interactant intactId="EBI-10175300">
        <id>Q8TD31-3</id>
    </interactant>
    <interactant intactId="EBI-355744">
        <id>Q12933</id>
        <label>TRAF2</label>
    </interactant>
    <organismsDiffer>false</organismsDiffer>
    <experiments>8</experiments>
</comment>
<comment type="interaction">
    <interactant intactId="EBI-10175300">
        <id>Q8TD31-3</id>
    </interactant>
    <interactant intactId="EBI-719493">
        <id>P14373</id>
        <label>TRIM27</label>
    </interactant>
    <organismsDiffer>false</organismsDiffer>
    <experiments>3</experiments>
</comment>
<comment type="interaction">
    <interactant intactId="EBI-10175300">
        <id>Q8TD31-3</id>
    </interactant>
    <interactant intactId="EBI-2130429">
        <id>Q9BYV2</id>
        <label>TRIM54</label>
    </interactant>
    <organismsDiffer>false</organismsDiffer>
    <experiments>3</experiments>
</comment>
<comment type="interaction">
    <interactant intactId="EBI-10175300">
        <id>Q8TD31-3</id>
    </interactant>
    <interactant intactId="EBI-11059915">
        <id>Q8N7C3</id>
        <label>TRIML2</label>
    </interactant>
    <organismsDiffer>false</organismsDiffer>
    <experiments>3</experiments>
</comment>
<comment type="interaction">
    <interactant intactId="EBI-10175300">
        <id>Q8TD31-3</id>
    </interactant>
    <interactant intactId="EBI-346882">
        <id>Q99816</id>
        <label>TSG101</label>
    </interactant>
    <organismsDiffer>false</organismsDiffer>
    <experiments>3</experiments>
</comment>
<comment type="interaction">
    <interactant intactId="EBI-10175300">
        <id>Q8TD31-3</id>
    </interactant>
    <interactant intactId="EBI-744794">
        <id>Q9BZW7</id>
        <label>TSGA10</label>
    </interactant>
    <organismsDiffer>false</organismsDiffer>
    <experiments>6</experiments>
</comment>
<comment type="interaction">
    <interactant intactId="EBI-10175300">
        <id>Q8TD31-3</id>
    </interactant>
    <interactant intactId="EBI-9053916">
        <id>Q63HK5</id>
        <label>TSHZ3</label>
    </interactant>
    <organismsDiffer>false</organismsDiffer>
    <experiments>3</experiments>
</comment>
<comment type="interaction">
    <interactant intactId="EBI-10175300">
        <id>Q8TD31-3</id>
    </interactant>
    <interactant intactId="EBI-359793">
        <id>P40222</id>
        <label>TXLNA</label>
    </interactant>
    <organismsDiffer>false</organismsDiffer>
    <experiments>6</experiments>
</comment>
<comment type="interaction">
    <interactant intactId="EBI-10175300">
        <id>Q8TD31-3</id>
    </interactant>
    <interactant intactId="EBI-6116822">
        <id>Q8N3L3</id>
        <label>TXLNB</label>
    </interactant>
    <organismsDiffer>false</organismsDiffer>
    <experiments>6</experiments>
</comment>
<comment type="interaction">
    <interactant intactId="EBI-10175300">
        <id>Q8TD31-3</id>
    </interactant>
    <interactant intactId="EBI-739895">
        <id>Q8N6Y0</id>
        <label>USHBP1</label>
    </interactant>
    <organismsDiffer>false</organismsDiffer>
    <experiments>6</experiments>
</comment>
<comment type="interaction">
    <interactant intactId="EBI-10175300">
        <id>Q8TD31-3</id>
    </interactant>
    <interactant intactId="EBI-2799833">
        <id>Q8N1B4</id>
        <label>VPS52</label>
    </interactant>
    <organismsDiffer>false</organismsDiffer>
    <experiments>3</experiments>
</comment>
<comment type="interaction">
    <interactant intactId="EBI-10175300">
        <id>Q8TD31-3</id>
    </interactant>
    <interactant intactId="EBI-9031083">
        <id>Q9Y2B5</id>
        <label>VPS9D1</label>
    </interactant>
    <organismsDiffer>false</organismsDiffer>
    <experiments>3</experiments>
</comment>
<comment type="interaction">
    <interactant intactId="EBI-10175300">
        <id>Q8TD31-3</id>
    </interactant>
    <interactant intactId="EBI-712969">
        <id>Q9Y3C0</id>
        <label>WASHC3</label>
    </interactant>
    <organismsDiffer>false</organismsDiffer>
    <experiments>6</experiments>
</comment>
<comment type="interaction">
    <interactant intactId="EBI-10175300">
        <id>Q8TD31-3</id>
    </interactant>
    <interactant intactId="EBI-711925">
        <id>Q05516</id>
        <label>ZBTB16</label>
    </interactant>
    <organismsDiffer>false</organismsDiffer>
    <experiments>3</experiments>
</comment>
<comment type="interaction">
    <interactant intactId="EBI-10175300">
        <id>Q8TD31-3</id>
    </interactant>
    <interactant intactId="EBI-10187928">
        <id>Q96K21-3</id>
        <label>ZFYVE19</label>
    </interactant>
    <organismsDiffer>false</organismsDiffer>
    <experiments>3</experiments>
</comment>
<comment type="interaction">
    <interactant intactId="EBI-10175300">
        <id>Q8TD31-3</id>
    </interactant>
    <interactant intactId="EBI-10183064">
        <id>Q8N5A5-2</id>
        <label>ZGPAT</label>
    </interactant>
    <organismsDiffer>false</organismsDiffer>
    <experiments>3</experiments>
</comment>
<comment type="interaction">
    <interactant intactId="EBI-10175300">
        <id>Q8TD31-3</id>
    </interactant>
    <interactant intactId="EBI-4395669">
        <id>Q6ZNG0</id>
        <label>ZNF620</label>
    </interactant>
    <organismsDiffer>false</organismsDiffer>
    <experiments>3</experiments>
</comment>
<comment type="interaction">
    <interactant intactId="EBI-10175300">
        <id>Q8TD31-3</id>
    </interactant>
    <interactant intactId="EBI-9977294">
        <id>Q9UEG4</id>
        <label>ZNF629</label>
    </interactant>
    <organismsDiffer>false</organismsDiffer>
    <experiments>3</experiments>
</comment>
<comment type="interaction">
    <interactant intactId="EBI-10175300">
        <id>Q8TD31-3</id>
    </interactant>
    <interactant intactId="EBI-625509">
        <id>Q8N720</id>
        <label>ZNF655</label>
    </interactant>
    <organismsDiffer>false</organismsDiffer>
    <experiments>3</experiments>
</comment>
<comment type="interaction">
    <interactant intactId="EBI-10175300">
        <id>Q8TD31-3</id>
    </interactant>
    <interactant intactId="EBI-10251462">
        <id>Q6NX45</id>
        <label>ZNF774</label>
    </interactant>
    <organismsDiffer>false</organismsDiffer>
    <experiments>3</experiments>
</comment>
<comment type="interaction">
    <interactant intactId="EBI-10175300">
        <id>Q8TD31-3</id>
    </interactant>
    <interactant intactId="EBI-1001132">
        <id>O95229</id>
        <label>ZWINT</label>
    </interactant>
    <organismsDiffer>false</organismsDiffer>
    <experiments>3</experiments>
</comment>
<comment type="interaction">
    <interactant intactId="EBI-10175300">
        <id>Q8TD31-3</id>
    </interactant>
    <interactant intactId="EBI-17234977">
        <id>A0A1U9X8X8</id>
    </interactant>
    <organismsDiffer>false</organismsDiffer>
    <experiments>3</experiments>
</comment>
<comment type="subcellular location">
    <subcellularLocation>
        <location>Cytoplasm</location>
    </subcellularLocation>
    <subcellularLocation>
        <location>Nucleus</location>
    </subcellularLocation>
</comment>
<comment type="alternative products">
    <event type="alternative splicing"/>
    <isoform>
        <id>Q8TD31-1</id>
        <name>1</name>
        <sequence type="displayed"/>
    </isoform>
    <isoform>
        <id>Q8TD31-2</id>
        <name>2</name>
        <sequence type="described" ref="VSP_038062"/>
    </isoform>
    <isoform>
        <id>Q8TD31-3</id>
        <name>3</name>
        <sequence type="described" ref="VSP_047069"/>
    </isoform>
</comment>
<comment type="tissue specificity">
    <text>Found in all tissues tested, abundantly expressed in heart, liver, skeletal muscle, kidney and pancreas, and to a lesser extent in lung and placenta. Overexpressed in keratinocytes of psoriatic lesions.</text>
</comment>
<comment type="polymorphism">
    <text evidence="5">HCR*WWCC is associated with susceptibility to psoriasis. Psoriasis is a chronic inflammatory dermatosis that affects approximately 2% of the population. It is a multifactorial disease characterized by red, scaly skin lesions that are usually found on the scalp, elbows, and knees, and may be associated with severe arthritis. The lesions are caused by hyperproliferative keratinocytes and infiltration of inflammatory cells into the dermis and epidermis. The usual age of onset of psoriasis is between 15 and 30 years, although it can present at any age. Association of HCR with psoriasis seem to be due to linkage disequilibrium with Cw*06:02 (PubMed:11348465). HCR is unlikely to be directly involved in psoriasis development.</text>
</comment>
<comment type="sequence caution" evidence="13">
    <conflict type="erroneous initiation">
        <sequence resource="EMBL-CDS" id="AAF74221"/>
    </conflict>
    <text>Truncated N-terminus.</text>
</comment>
<comment type="sequence caution" evidence="13">
    <conflict type="erroneous initiation">
        <sequence resource="EMBL-CDS" id="BAA81890"/>
    </conflict>
    <text>Truncated N-terminus.</text>
</comment>
<comment type="sequence caution" evidence="13">
    <conflict type="erroneous gene model prediction">
        <sequence resource="EMBL-CDS" id="BAA82158"/>
    </conflict>
</comment>
<comment type="sequence caution" evidence="13">
    <conflict type="erroneous initiation">
        <sequence resource="EMBL-CDS" id="BAA91236"/>
    </conflict>
    <text>Truncated N-terminus.</text>
</comment>
<comment type="sequence caution" evidence="13">
    <conflict type="erroneous gene model prediction">
        <sequence resource="EMBL-CDS" id="BAB63313"/>
    </conflict>
</comment>
<comment type="sequence caution" evidence="13">
    <conflict type="erroneous gene model prediction">
        <sequence resource="EMBL-CDS" id="BAC54937"/>
    </conflict>
</comment>
<comment type="sequence caution" evidence="13">
    <molecule>Isoform 2</molecule>
    <conflict type="erroneous termination">
        <sequence resource="EMBL-CDS" id="AAI10536"/>
    </conflict>
    <text>Truncated C-terminus.</text>
</comment>
<proteinExistence type="evidence at protein level"/>
<evidence type="ECO:0000255" key="1"/>
<evidence type="ECO:0000256" key="2">
    <source>
        <dbReference type="SAM" id="MobiDB-lite"/>
    </source>
</evidence>
<evidence type="ECO:0000269" key="3">
    <source>
    </source>
</evidence>
<evidence type="ECO:0000269" key="4">
    <source>
    </source>
</evidence>
<evidence type="ECO:0000269" key="5">
    <source>
    </source>
</evidence>
<evidence type="ECO:0000269" key="6">
    <source>
    </source>
</evidence>
<evidence type="ECO:0000269" key="7">
    <source>
    </source>
</evidence>
<evidence type="ECO:0000269" key="8">
    <source>
    </source>
</evidence>
<evidence type="ECO:0000269" key="9">
    <source>
    </source>
</evidence>
<evidence type="ECO:0000269" key="10">
    <source ref="2"/>
</evidence>
<evidence type="ECO:0000269" key="11">
    <source ref="3"/>
</evidence>
<evidence type="ECO:0000303" key="12">
    <source>
    </source>
</evidence>
<evidence type="ECO:0000305" key="13"/>